<keyword id="KW-0002">3D-structure</keyword>
<keyword id="KW-0025">Alternative splicing</keyword>
<keyword id="KW-0037">Angiogenesis</keyword>
<keyword id="KW-0053">Apoptosis</keyword>
<keyword id="KW-0106">Calcium</keyword>
<keyword id="KW-0130">Cell adhesion</keyword>
<keyword id="KW-1015">Disulfide bond</keyword>
<keyword id="KW-0245">EGF-like domain</keyword>
<keyword id="KW-0256">Endoplasmic reticulum</keyword>
<keyword id="KW-0272">Extracellular matrix</keyword>
<keyword id="KW-0325">Glycoprotein</keyword>
<keyword id="KW-0358">Heparin-binding</keyword>
<keyword id="KW-0395">Inflammatory response</keyword>
<keyword id="KW-1267">Proteomics identification</keyword>
<keyword id="KW-1185">Reference proteome</keyword>
<keyword id="KW-0677">Repeat</keyword>
<keyword id="KW-0703">Sarcoplasmic reticulum</keyword>
<keyword id="KW-0964">Secreted</keyword>
<keyword id="KW-0732">Signal</keyword>
<keyword id="KW-0834">Unfolded protein response</keyword>
<protein>
    <recommendedName>
        <fullName>Thrombospondin-1</fullName>
    </recommendedName>
    <alternativeName>
        <fullName evidence="41">Glycoprotein G</fullName>
    </alternativeName>
</protein>
<reference key="1">
    <citation type="journal article" date="1986" name="J. Cell Biol.">
        <title>The structure of human thrombospondin, an adhesive glycoprotein with multiple calcium-binding sites and homologies with several different proteins.</title>
        <authorList>
            <person name="Lawler J."/>
            <person name="Hynes R.O."/>
        </authorList>
    </citation>
    <scope>NUCLEOTIDE SEQUENCE [MRNA] (ISOFORM 1)</scope>
    <scope>FUNCTION</scope>
    <source>
        <tissue>Endothelial cell</tissue>
    </source>
</reference>
<reference key="2">
    <citation type="journal article" date="1989" name="J. Cell Biol.">
        <title>Complete thrombospondin mRNA sequence includes potential regulatory sites in the 3' untranslated region.</title>
        <authorList>
            <person name="Hennessy S.W."/>
            <person name="Frazier B.A."/>
            <person name="Kim D.D."/>
            <person name="Deckwerth T.L."/>
            <person name="Baumgartel D.M."/>
            <person name="Rotwein P."/>
            <person name="Frazier W.A."/>
        </authorList>
    </citation>
    <scope>NUCLEOTIDE SEQUENCE [MRNA] (ISOFORM 1)</scope>
    <scope>VARIANT ALA-523</scope>
</reference>
<reference key="3">
    <citation type="journal article" date="2004" name="Nat. Genet.">
        <title>Complete sequencing and characterization of 21,243 full-length human cDNAs.</title>
        <authorList>
            <person name="Ota T."/>
            <person name="Suzuki Y."/>
            <person name="Nishikawa T."/>
            <person name="Otsuki T."/>
            <person name="Sugiyama T."/>
            <person name="Irie R."/>
            <person name="Wakamatsu A."/>
            <person name="Hayashi K."/>
            <person name="Sato H."/>
            <person name="Nagai K."/>
            <person name="Kimura K."/>
            <person name="Makita H."/>
            <person name="Sekine M."/>
            <person name="Obayashi M."/>
            <person name="Nishi T."/>
            <person name="Shibahara T."/>
            <person name="Tanaka T."/>
            <person name="Ishii S."/>
            <person name="Yamamoto J."/>
            <person name="Saito K."/>
            <person name="Kawai Y."/>
            <person name="Isono Y."/>
            <person name="Nakamura Y."/>
            <person name="Nagahari K."/>
            <person name="Murakami K."/>
            <person name="Yasuda T."/>
            <person name="Iwayanagi T."/>
            <person name="Wagatsuma M."/>
            <person name="Shiratori A."/>
            <person name="Sudo H."/>
            <person name="Hosoiri T."/>
            <person name="Kaku Y."/>
            <person name="Kodaira H."/>
            <person name="Kondo H."/>
            <person name="Sugawara M."/>
            <person name="Takahashi M."/>
            <person name="Kanda K."/>
            <person name="Yokoi T."/>
            <person name="Furuya T."/>
            <person name="Kikkawa E."/>
            <person name="Omura Y."/>
            <person name="Abe K."/>
            <person name="Kamihara K."/>
            <person name="Katsuta N."/>
            <person name="Sato K."/>
            <person name="Tanikawa M."/>
            <person name="Yamazaki M."/>
            <person name="Ninomiya K."/>
            <person name="Ishibashi T."/>
            <person name="Yamashita H."/>
            <person name="Murakawa K."/>
            <person name="Fujimori K."/>
            <person name="Tanai H."/>
            <person name="Kimata M."/>
            <person name="Watanabe M."/>
            <person name="Hiraoka S."/>
            <person name="Chiba Y."/>
            <person name="Ishida S."/>
            <person name="Ono Y."/>
            <person name="Takiguchi S."/>
            <person name="Watanabe S."/>
            <person name="Yosida M."/>
            <person name="Hotuta T."/>
            <person name="Kusano J."/>
            <person name="Kanehori K."/>
            <person name="Takahashi-Fujii A."/>
            <person name="Hara H."/>
            <person name="Tanase T.-O."/>
            <person name="Nomura Y."/>
            <person name="Togiya S."/>
            <person name="Komai F."/>
            <person name="Hara R."/>
            <person name="Takeuchi K."/>
            <person name="Arita M."/>
            <person name="Imose N."/>
            <person name="Musashino K."/>
            <person name="Yuuki H."/>
            <person name="Oshima A."/>
            <person name="Sasaki N."/>
            <person name="Aotsuka S."/>
            <person name="Yoshikawa Y."/>
            <person name="Matsunawa H."/>
            <person name="Ichihara T."/>
            <person name="Shiohata N."/>
            <person name="Sano S."/>
            <person name="Moriya S."/>
            <person name="Momiyama H."/>
            <person name="Satoh N."/>
            <person name="Takami S."/>
            <person name="Terashima Y."/>
            <person name="Suzuki O."/>
            <person name="Nakagawa S."/>
            <person name="Senoh A."/>
            <person name="Mizoguchi H."/>
            <person name="Goto Y."/>
            <person name="Shimizu F."/>
            <person name="Wakebe H."/>
            <person name="Hishigaki H."/>
            <person name="Watanabe T."/>
            <person name="Sugiyama A."/>
            <person name="Takemoto M."/>
            <person name="Kawakami B."/>
            <person name="Yamazaki M."/>
            <person name="Watanabe K."/>
            <person name="Kumagai A."/>
            <person name="Itakura S."/>
            <person name="Fukuzumi Y."/>
            <person name="Fujimori Y."/>
            <person name="Komiyama M."/>
            <person name="Tashiro H."/>
            <person name="Tanigami A."/>
            <person name="Fujiwara T."/>
            <person name="Ono T."/>
            <person name="Yamada K."/>
            <person name="Fujii Y."/>
            <person name="Ozaki K."/>
            <person name="Hirao M."/>
            <person name="Ohmori Y."/>
            <person name="Kawabata A."/>
            <person name="Hikiji T."/>
            <person name="Kobatake N."/>
            <person name="Inagaki H."/>
            <person name="Ikema Y."/>
            <person name="Okamoto S."/>
            <person name="Okitani R."/>
            <person name="Kawakami T."/>
            <person name="Noguchi S."/>
            <person name="Itoh T."/>
            <person name="Shigeta K."/>
            <person name="Senba T."/>
            <person name="Matsumura K."/>
            <person name="Nakajima Y."/>
            <person name="Mizuno T."/>
            <person name="Morinaga M."/>
            <person name="Sasaki M."/>
            <person name="Togashi T."/>
            <person name="Oyama M."/>
            <person name="Hata H."/>
            <person name="Watanabe M."/>
            <person name="Komatsu T."/>
            <person name="Mizushima-Sugano J."/>
            <person name="Satoh T."/>
            <person name="Shirai Y."/>
            <person name="Takahashi Y."/>
            <person name="Nakagawa K."/>
            <person name="Okumura K."/>
            <person name="Nagase T."/>
            <person name="Nomura N."/>
            <person name="Kikuchi H."/>
            <person name="Masuho Y."/>
            <person name="Yamashita R."/>
            <person name="Nakai K."/>
            <person name="Yada T."/>
            <person name="Nakamura Y."/>
            <person name="Ohara O."/>
            <person name="Isogai T."/>
            <person name="Sugano S."/>
        </authorList>
    </citation>
    <scope>NUCLEOTIDE SEQUENCE [LARGE SCALE MRNA] (ISOFORMS 1 AND 2)</scope>
    <scope>VARIANT ALA-523</scope>
    <source>
        <tissue>Placenta</tissue>
        <tissue>Uterus</tissue>
    </source>
</reference>
<reference key="4">
    <citation type="submission" date="2005-03" db="EMBL/GenBank/DDBJ databases">
        <title>Homo sapiens protein coding cDNA.</title>
        <authorList>
            <person name="Totoki Y."/>
            <person name="Toyoda A."/>
            <person name="Takeda T."/>
            <person name="Sakaki Y."/>
            <person name="Tanaka A."/>
            <person name="Yokoyama S."/>
            <person name="Ohara O."/>
            <person name="Nagase T."/>
            <person name="Kikuno R.F."/>
        </authorList>
    </citation>
    <scope>NUCLEOTIDE SEQUENCE [LARGE SCALE MRNA] (ISOFORM 1)</scope>
    <scope>VARIANT SER-700</scope>
    <source>
        <tissue>Aortic endothelium</tissue>
    </source>
</reference>
<reference key="5">
    <citation type="journal article" date="2006" name="Nature">
        <title>Analysis of the DNA sequence and duplication history of human chromosome 15.</title>
        <authorList>
            <person name="Zody M.C."/>
            <person name="Garber M."/>
            <person name="Sharpe T."/>
            <person name="Young S.K."/>
            <person name="Rowen L."/>
            <person name="O'Neill K."/>
            <person name="Whittaker C.A."/>
            <person name="Kamal M."/>
            <person name="Chang J.L."/>
            <person name="Cuomo C.A."/>
            <person name="Dewar K."/>
            <person name="FitzGerald M.G."/>
            <person name="Kodira C.D."/>
            <person name="Madan A."/>
            <person name="Qin S."/>
            <person name="Yang X."/>
            <person name="Abbasi N."/>
            <person name="Abouelleil A."/>
            <person name="Arachchi H.M."/>
            <person name="Baradarani L."/>
            <person name="Birditt B."/>
            <person name="Bloom S."/>
            <person name="Bloom T."/>
            <person name="Borowsky M.L."/>
            <person name="Burke J."/>
            <person name="Butler J."/>
            <person name="Cook A."/>
            <person name="DeArellano K."/>
            <person name="DeCaprio D."/>
            <person name="Dorris L. III"/>
            <person name="Dors M."/>
            <person name="Eichler E.E."/>
            <person name="Engels R."/>
            <person name="Fahey J."/>
            <person name="Fleetwood P."/>
            <person name="Friedman C."/>
            <person name="Gearin G."/>
            <person name="Hall J.L."/>
            <person name="Hensley G."/>
            <person name="Johnson E."/>
            <person name="Jones C."/>
            <person name="Kamat A."/>
            <person name="Kaur A."/>
            <person name="Locke D.P."/>
            <person name="Madan A."/>
            <person name="Munson G."/>
            <person name="Jaffe D.B."/>
            <person name="Lui A."/>
            <person name="Macdonald P."/>
            <person name="Mauceli E."/>
            <person name="Naylor J.W."/>
            <person name="Nesbitt R."/>
            <person name="Nicol R."/>
            <person name="O'Leary S.B."/>
            <person name="Ratcliffe A."/>
            <person name="Rounsley S."/>
            <person name="She X."/>
            <person name="Sneddon K.M.B."/>
            <person name="Stewart S."/>
            <person name="Sougnez C."/>
            <person name="Stone S.M."/>
            <person name="Topham K."/>
            <person name="Vincent D."/>
            <person name="Wang S."/>
            <person name="Zimmer A.R."/>
            <person name="Birren B.W."/>
            <person name="Hood L."/>
            <person name="Lander E.S."/>
            <person name="Nusbaum C."/>
        </authorList>
    </citation>
    <scope>NUCLEOTIDE SEQUENCE [LARGE SCALE GENOMIC DNA]</scope>
</reference>
<reference key="6">
    <citation type="journal article" date="2004" name="Genome Res.">
        <title>The status, quality, and expansion of the NIH full-length cDNA project: the Mammalian Gene Collection (MGC).</title>
        <authorList>
            <consortium name="The MGC Project Team"/>
        </authorList>
    </citation>
    <scope>NUCLEOTIDE SEQUENCE [LARGE SCALE MRNA] (ISOFORM 1)</scope>
    <source>
        <tissue>Testis</tissue>
    </source>
</reference>
<reference key="7">
    <citation type="journal article" date="1986" name="Biochemistry">
        <title>Partial amino acid sequence of human thrombospondin as determined by analysis of cDNA clones: homology to malarial circumsporozoite proteins.</title>
        <authorList>
            <person name="Kobayashi S."/>
            <person name="Eden-Mccutchan F."/>
            <person name="Framson P."/>
            <person name="Bornstein P."/>
        </authorList>
    </citation>
    <scope>NUCLEOTIDE SEQUENCE [MRNA] OF 1-397 (ISOFORM 1)</scope>
</reference>
<reference key="8">
    <citation type="journal article" date="1986" name="Proc. Natl. Acad. Sci. U.S.A.">
        <title>Characterization of a cDNA encoding the heparin and collagen binding domains of human thrombospondin.</title>
        <authorList>
            <person name="Dixit V.M."/>
            <person name="Hennessy S.W."/>
            <person name="Grant G.A."/>
            <person name="Rotwein P."/>
            <person name="Frazier W.A."/>
        </authorList>
    </citation>
    <scope>NUCLEOTIDE SEQUENCE [MRNA] OF 1-374 (ISOFORM 1)</scope>
</reference>
<reference key="9">
    <citation type="journal article" date="1989" name="J. Biol. Chem.">
        <title>Characterization of the promoter region of the human thrombospondin gene. DNA sequences within the first intron increase transcription.</title>
        <authorList>
            <person name="Laherty C.D."/>
            <person name="Gierman T.M."/>
            <person name="Dixit V.M."/>
        </authorList>
    </citation>
    <scope>NUCLEOTIDE SEQUENCE [GENOMIC DNA] OF 1-166</scope>
</reference>
<reference key="10">
    <citation type="submission" date="1992-12" db="EMBL/GenBank/DDBJ databases">
        <title>Expression of thrombospondin in chronic inflammation: neutrophils from synovial fluids synthesize a novel 3.9 kb TSP mRNA.</title>
        <authorList>
            <person name="la Fleur M."/>
            <person name="Jobin C."/>
            <person name="Gauthier J."/>
            <person name="Kreis C.G."/>
        </authorList>
    </citation>
    <scope>NUCLEOTIDE SEQUENCE [MRNA] OF 1028-1170 (ISOFORM 1)</scope>
</reference>
<reference key="11">
    <citation type="journal article" date="1978" name="J. Biol. Chem.">
        <title>Isolation and characterization of a high molecular weight glycoprotein from human blood platelets.</title>
        <authorList>
            <person name="Lawler J.W."/>
            <person name="Slayter H.S."/>
            <person name="Coligan J.E."/>
        </authorList>
    </citation>
    <scope>FUNCTION</scope>
    <scope>SUBUNIT</scope>
    <scope>SUBCELLULAR LOCATION</scope>
    <scope>TISSUE SPECIFICITY</scope>
</reference>
<reference key="12">
    <citation type="journal article" date="1980" name="J. Biol. Chem.">
        <title>Ca2+-mediated association of glycoprotein G (thrombin-sensitive protein, thrombospondin) with human platelets.</title>
        <authorList>
            <person name="Phillips D.R."/>
            <person name="Jennings L.K."/>
            <person name="Prasanna H.R."/>
        </authorList>
    </citation>
    <scope>SUBCELLULAR LOCATION</scope>
</reference>
<reference key="13">
    <citation type="journal article" date="1983" name="Proc. Natl. Acad. Sci. U.S.A.">
        <title>Cultured human fibroblasts synthesize and secrete thrombospondin and incorporate it into extracellular matrix.</title>
        <authorList>
            <person name="Jaffe E.A."/>
            <person name="Ruggiero J.T."/>
            <person name="Leung L.K."/>
            <person name="Doyle M.J."/>
            <person name="McKeown-Longo P.J."/>
            <person name="Mosher D.F."/>
        </authorList>
    </citation>
    <scope>SUBCELLULAR LOCATION</scope>
</reference>
<reference key="14">
    <citation type="journal article" date="1984" name="Eur. J. Biochem.">
        <title>Thrombospondin interactions with fibronectin and fibrinogen. Mutual inhibition in binding.</title>
        <authorList>
            <person name="Lahav J."/>
            <person name="Lawler J."/>
            <person name="Gimbrone M.A."/>
        </authorList>
    </citation>
    <scope>FUNCTION</scope>
    <scope>INTERACTION WITH FIBRONECTIN AND FIBRINOGEN</scope>
</reference>
<reference key="15">
    <citation type="journal article" date="1984" name="J. Cell Biol.">
        <title>Interactions of thrombospondin with extracellular matrix proteins: selective binding to type V collagen.</title>
        <authorList>
            <person name="Mumby S.M."/>
            <person name="Raugi G.J."/>
            <person name="Bornstein P."/>
        </authorList>
    </citation>
    <scope>INTERACTION WITH TYPE V COLLAGEN AND LAMININ</scope>
</reference>
<reference key="16">
    <citation type="journal article" date="1989" name="Blood">
        <title>An integrin receptor on normal and thrombasthenic platelets that binds thrombospondin.</title>
        <authorList>
            <person name="Lawler J."/>
            <person name="Hynes R.O."/>
        </authorList>
    </citation>
    <scope>INTERACTION WITH INTEGRIN RECEPTOR</scope>
</reference>
<reference key="17">
    <citation type="journal article" date="1992" name="Biochem. Biophys. Res. Commun.">
        <title>Thrombospondin sequence motif (CSVTCG) is responsible for CD36 binding.</title>
        <authorList>
            <person name="Asch A.S."/>
            <person name="Silbiger S."/>
            <person name="Heimer E."/>
            <person name="Nachman R.L."/>
        </authorList>
    </citation>
    <scope>FUNCTION</scope>
    <scope>INTERACTION WITH CD36</scope>
</reference>
<reference key="18">
    <citation type="journal article" date="1996" name="J. Biol. Chem.">
        <title>Integrin-associated protein is a receptor for the C-terminal domain of thrombospondin.</title>
        <authorList>
            <person name="Gao A.G."/>
            <person name="Lindberg F.P."/>
            <person name="Finn M.B."/>
            <person name="Blystone S.D."/>
            <person name="Brown E.J."/>
            <person name="Frazier W.A."/>
        </authorList>
    </citation>
    <scope>FUNCTION</scope>
    <scope>INTERACTION WITH CD47</scope>
</reference>
<reference key="19">
    <citation type="journal article" date="2000" name="Nat. Med.">
        <title>Signals leading to apoptosis-dependent inhibition of neovascularization by thrombospondin-1.</title>
        <authorList>
            <person name="Jimenez B."/>
            <person name="Volpert O.V."/>
            <person name="Crawford S.E."/>
            <person name="Febbraio M."/>
            <person name="Silverstein R.L."/>
            <person name="Bouck N."/>
        </authorList>
    </citation>
    <scope>FUNCTION</scope>
    <scope>INTERACTION WITH CD36</scope>
</reference>
<reference key="20">
    <citation type="journal article" date="2001" name="J. Biol. Chem.">
        <title>C-mannosylation and O-fucosylation of the thrombospondin type 1 module.</title>
        <authorList>
            <person name="Hofsteenge J."/>
            <person name="Huwiler K.G."/>
            <person name="Macek B."/>
            <person name="Hess D."/>
            <person name="Lawler J."/>
            <person name="Mosher D.F."/>
            <person name="Peter-Katalinic J."/>
        </authorList>
    </citation>
    <scope>GLYCOSYLATION AT TRP-385; SER-394; TRP-438; TRP-441; THR-450; TRP-498 AND THR-507</scope>
    <source>
        <tissue>Platelet</tissue>
    </source>
</reference>
<reference key="21">
    <citation type="journal article" date="2001" name="J. Clin. Invest.">
        <title>Histidine-rich glycoprotein inhibits the antiangiogenic effect of thrombospondin-1.</title>
        <authorList>
            <person name="Simantov R."/>
            <person name="Febbraio M."/>
            <person name="Crombie R."/>
            <person name="Asch A.S."/>
            <person name="Nachman R.L."/>
            <person name="Silverstein R.L."/>
        </authorList>
    </citation>
    <scope>FUNCTION</scope>
    <scope>INTERACTION WITH HRG</scope>
</reference>
<reference key="22">
    <citation type="journal article" date="2002" name="Biochemistry">
        <title>Biophysical characterization, including disulfide bond assignments, of the anti-angiogenic type 1 domains of human thrombospondin-1.</title>
        <authorList>
            <person name="Huwiler K.G."/>
            <person name="Vestling M.M."/>
            <person name="Annis D.S."/>
            <person name="Mosher D.F."/>
        </authorList>
    </citation>
    <scope>DISULFIDE BONDS IN THROMBOSPONDIN DOMAIN</scope>
</reference>
<reference key="23">
    <citation type="journal article" date="2003" name="J. Exp. Med.">
        <title>Thrombospondin 1 is an autocrine negative regulator of human dendritic cell activation.</title>
        <authorList>
            <person name="Doyen V."/>
            <person name="Rubio M."/>
            <person name="Braun D."/>
            <person name="Nakajima T."/>
            <person name="Abe J."/>
            <person name="Saito H."/>
            <person name="Delespesse G."/>
            <person name="Sarfati M."/>
        </authorList>
    </citation>
    <scope>FUNCTION</scope>
    <scope>SUBCELLULAR LOCATION</scope>
    <scope>INDUCTION BY PROSTAGLANDIN E2</scope>
    <scope>TISSUE SPECIFICITY</scope>
</reference>
<reference key="24">
    <citation type="journal article" date="2005" name="J. Proteome Res.">
        <title>Human plasma N-glycoproteome analysis by immunoaffinity subtraction, hydrazide chemistry, and mass spectrometry.</title>
        <authorList>
            <person name="Liu T."/>
            <person name="Qian W.-J."/>
            <person name="Gritsenko M.A."/>
            <person name="Camp D.G. II"/>
            <person name="Monroe M.E."/>
            <person name="Moore R.J."/>
            <person name="Smith R.D."/>
        </authorList>
    </citation>
    <scope>GLYCOSYLATION [LARGE SCALE ANALYSIS] AT ASN-248 AND ASN-1067</scope>
    <source>
        <tissue>Plasma</tissue>
    </source>
</reference>
<reference key="25">
    <citation type="journal article" date="2006" name="J. Proteome Res.">
        <title>Identification of N-linked glycoproteins in human saliva by glycoprotein capture and mass spectrometry.</title>
        <authorList>
            <person name="Ramachandran P."/>
            <person name="Boontheung P."/>
            <person name="Xie Y."/>
            <person name="Sondej M."/>
            <person name="Wong D.T."/>
            <person name="Loo J.A."/>
        </authorList>
    </citation>
    <scope>GLYCOSYLATION [LARGE SCALE ANALYSIS] AT ASN-1067</scope>
    <source>
        <tissue>Saliva</tissue>
    </source>
</reference>
<reference key="26">
    <citation type="journal article" date="2006" name="Mol. Cell. Proteomics">
        <title>Elucidation of N-glycosylation sites on human platelet proteins: a glycoproteomic approach.</title>
        <authorList>
            <person name="Lewandrowski U."/>
            <person name="Moebius J."/>
            <person name="Walter U."/>
            <person name="Sickmann A."/>
        </authorList>
    </citation>
    <scope>GLYCOSYLATION [LARGE SCALE ANALYSIS] AT ASN-248</scope>
    <source>
        <tissue>Platelet</tissue>
    </source>
</reference>
<reference key="27">
    <citation type="journal article" date="2008" name="J. Cell Sci.">
        <title>Extracellular matrix retention of thrombospondin 1 is controlled by its conserved C-terminal region.</title>
        <authorList>
            <person name="Adams J.C."/>
            <person name="Bentley A.A."/>
            <person name="Kvansakul M."/>
            <person name="Hatherley D."/>
            <person name="Hohenester E."/>
        </authorList>
    </citation>
    <scope>FUNCTION</scope>
    <scope>SUBUNIT</scope>
    <scope>SUBCELLULAR LOCATION</scope>
    <scope>MUTAGENESIS OF ARG-926 AND 1019-ASP--ASP-1021</scope>
</reference>
<reference key="28">
    <citation type="journal article" date="2008" name="Matrix Biol.">
        <title>TSG-6 binds via its CUB_C domain to the cell-binding domain of fibronectin and increases fibronectin matrix assembly.</title>
        <authorList>
            <person name="Kuznetsova S.A."/>
            <person name="Mahoney D.J."/>
            <person name="Martin-Manso G."/>
            <person name="Ali T."/>
            <person name="Nentwich H.A."/>
            <person name="Sipes J.M."/>
            <person name="Zeng B."/>
            <person name="Vogel T."/>
            <person name="Day A.J."/>
            <person name="Roberts D.D."/>
        </authorList>
    </citation>
    <scope>INTERACTION WITH FN1</scope>
</reference>
<reference key="29">
    <citation type="journal article" date="2009" name="J. Biol. Chem.">
        <title>Differential interactions of thrombospondin-1, -2, and -4 with CD47 and effects on cGMP signaling and ischemic injury responses.</title>
        <authorList>
            <person name="Isenberg J.S."/>
            <person name="Annis D.S."/>
            <person name="Pendrak M.L."/>
            <person name="Ptaszynska M."/>
            <person name="Frazier W.A."/>
            <person name="Mosher D.F."/>
            <person name="Roberts D.D."/>
        </authorList>
    </citation>
    <scope>FUNCTION</scope>
    <scope>INTERACTION WITH CD47</scope>
</reference>
<reference key="30">
    <citation type="journal article" date="2009" name="J. Proteome Res.">
        <title>Glycoproteomics analysis of human liver tissue by combination of multiple enzyme digestion and hydrazide chemistry.</title>
        <authorList>
            <person name="Chen R."/>
            <person name="Jiang X."/>
            <person name="Sun D."/>
            <person name="Han G."/>
            <person name="Wang F."/>
            <person name="Ye M."/>
            <person name="Wang L."/>
            <person name="Zou H."/>
        </authorList>
    </citation>
    <scope>GLYCOSYLATION [LARGE SCALE ANALYSIS] AT ASN-1067</scope>
    <source>
        <tissue>Liver</tissue>
    </source>
</reference>
<reference key="31">
    <citation type="journal article" date="2011" name="BMC Syst. Biol.">
        <title>Initial characterization of the human central proteome.</title>
        <authorList>
            <person name="Burkard T.R."/>
            <person name="Planyavsky M."/>
            <person name="Kaupe I."/>
            <person name="Breitwieser F.P."/>
            <person name="Buerckstuemmer T."/>
            <person name="Bennett K.L."/>
            <person name="Superti-Furga G."/>
            <person name="Colinge J."/>
        </authorList>
    </citation>
    <scope>IDENTIFICATION BY MASS SPECTROMETRY [LARGE SCALE ANALYSIS]</scope>
</reference>
<reference key="32">
    <citation type="journal article" date="2014" name="J. Am. Soc. Nephrol.">
        <title>Thrombospondin-1 activation of signal-regulatory protein-alpha stimulates reactive oxygen species production and promotes renal ischemia reperfusion injury.</title>
        <authorList>
            <person name="Yao M."/>
            <person name="Rogers N.M."/>
            <person name="Csanyi G."/>
            <person name="Rodriguez A.I."/>
            <person name="Ross M.A."/>
            <person name="St Croix C."/>
            <person name="Knupp H."/>
            <person name="Novelli E.M."/>
            <person name="Thomson A.W."/>
            <person name="Pagano P.J."/>
            <person name="Isenberg J.S."/>
        </authorList>
    </citation>
    <scope>FUNCTION</scope>
    <scope>INTERACTION WITH SIRPA</scope>
</reference>
<reference key="33">
    <citation type="journal article" date="2014" name="J. Proteomics">
        <title>An enzyme assisted RP-RPLC approach for in-depth analysis of human liver phosphoproteome.</title>
        <authorList>
            <person name="Bian Y."/>
            <person name="Song C."/>
            <person name="Cheng K."/>
            <person name="Dong M."/>
            <person name="Wang F."/>
            <person name="Huang J."/>
            <person name="Sun D."/>
            <person name="Wang L."/>
            <person name="Ye M."/>
            <person name="Zou H."/>
        </authorList>
    </citation>
    <scope>IDENTIFICATION BY MASS SPECTROMETRY [LARGE SCALE ANALYSIS]</scope>
    <source>
        <tissue>Liver</tissue>
    </source>
</reference>
<reference key="34">
    <citation type="journal article" date="2017" name="Cardiovasc. Res.">
        <title>TSP1-CD47 signaling is upregulated in clinical pulmonary hypertension and contributes to pulmonary arterial vasculopathy and dysfunction.</title>
        <authorList>
            <person name="Rogers N.M."/>
            <person name="Sharifi-Sanjani M."/>
            <person name="Yao M."/>
            <person name="Ghimire K."/>
            <person name="Bienes-Martinez R."/>
            <person name="Mutchler S.M."/>
            <person name="Knupp H.E."/>
            <person name="Baust J."/>
            <person name="Novelli E.M."/>
            <person name="Ross M."/>
            <person name="St Croix C."/>
            <person name="Kutten J.C."/>
            <person name="Czajka C.A."/>
            <person name="Sembrat J.C."/>
            <person name="Rojas M."/>
            <person name="Labrousse-Arias D."/>
            <person name="Bachman T.N."/>
            <person name="Vanderpool R.R."/>
            <person name="Zuckerbraun B.S."/>
            <person name="Champion H.C."/>
            <person name="Mora A.L."/>
            <person name="Straub A.C."/>
            <person name="Bilonick R.A."/>
            <person name="Calzada M.J."/>
            <person name="Isenberg J.S."/>
        </authorList>
    </citation>
    <scope>INDUCTION</scope>
</reference>
<reference key="35">
    <citation type="journal article" date="2017" name="Sci. Signal.">
        <title>The matricellular protein TSP1 promotes human and mouse endothelial cell senescence through CD47 and Nox1.</title>
        <authorList>
            <person name="Meijles D.N."/>
            <person name="Sahoo S."/>
            <person name="Al Ghouleh I."/>
            <person name="Amaral J.H."/>
            <person name="Bienes-Martinez R."/>
            <person name="Knupp H.E."/>
            <person name="Attaran S."/>
            <person name="Sembrat J.C."/>
            <person name="Nouraie S.M."/>
            <person name="Rojas M.M."/>
            <person name="Novelli E.M."/>
            <person name="Gladwin M.T."/>
            <person name="Isenberg J.S."/>
            <person name="Cifuentes-Pagano E."/>
            <person name="Pagano P.J."/>
        </authorList>
    </citation>
    <scope>FUNCTION</scope>
    <scope>INDUCTION</scope>
</reference>
<reference key="36">
    <citation type="journal article" date="2020" name="Cells">
        <title>CD47 Promotes Age-Associated Deterioration in Angiogenesis, Blood Flow and Glucose Homeostasis.</title>
        <authorList>
            <person name="Ghimire K."/>
            <person name="Li Y."/>
            <person name="Chiba T."/>
            <person name="Julovi S.M."/>
            <person name="Li J."/>
            <person name="Ross M.A."/>
            <person name="Straub A.C."/>
            <person name="O'Connell P.J."/>
            <person name="Rueegg C."/>
            <person name="Pagano P.J."/>
            <person name="Isenberg J.S."/>
            <person name="Rogers N.M."/>
        </authorList>
    </citation>
    <scope>FUNCTION</scope>
    <scope>INDUCTION</scope>
</reference>
<reference key="37">
    <citation type="journal article" date="2024" name="Mol. Cell. Proteomics">
        <title>Analysis of the Healthy Platelet Proteome Identifies a New Form of Domain-Specific O-Fucosylation.</title>
        <authorList>
            <person name="Houlahan C.B."/>
            <person name="Kong Y."/>
            <person name="Johnston B."/>
            <person name="Cielesh M."/>
            <person name="Chau T.H."/>
            <person name="Fenwick J."/>
            <person name="Coleman P.R."/>
            <person name="Hao H."/>
            <person name="Haltiwanger R.S."/>
            <person name="Thaysen-Andersen M."/>
            <person name="Passam F.H."/>
            <person name="Larance M."/>
        </authorList>
    </citation>
    <scope>GLYCOSYLATION AT SER-553</scope>
</reference>
<reference key="38">
    <citation type="journal article" date="2002" name="J. Cell Biol.">
        <title>Crystal structure of the TSP-1 type 1 repeats: a novel layered fold and its biological implication.</title>
        <authorList>
            <person name="Tan K."/>
            <person name="Duquette M."/>
            <person name="Liu J.-H."/>
            <person name="Dong Y."/>
            <person name="Zhang R."/>
            <person name="Joachimiak A."/>
            <person name="Lawler J."/>
            <person name="Wang J.-H."/>
        </authorList>
    </citation>
    <scope>X-RAY CRYSTALLOGRAPHY (1.9 ANGSTROMS) OF 434-546</scope>
    <scope>DISULFIDE BONDS</scope>
    <scope>GLYCOSYLATION AT THR-450 AND THR-507</scope>
</reference>
<reference key="39">
    <citation type="journal article" date="2004" name="EMBO J.">
        <title>Structure of a thrombospondin C-terminal fragment reveals a novel calcium core in the type 3 repeats.</title>
        <authorList>
            <person name="Kvansakul M."/>
            <person name="Adams J.C."/>
            <person name="Hohenester E."/>
        </authorList>
    </citation>
    <scope>X-RAY CRYSTALLOGRAPHY (1.9 ANGSTROMS) OF 834-1170 IN COMPLEX WITH CALCIUM IONS</scope>
    <scope>DISULFIDE BONDS</scope>
    <scope>MUTAGENESIS OF ASN-1067</scope>
    <scope>GLYCOSYLATION AT ASN-1067</scope>
    <scope>CELL ATTACHMENT SITE</scope>
    <scope>FUNCTION</scope>
</reference>
<reference key="40">
    <citation type="journal article" date="2006" name="Structure">
        <title>The structures of the thrombospondin-1 N-terminal domain and its complex with a synthetic pentameric heparin.</title>
        <authorList>
            <person name="Tan K."/>
            <person name="Duquette M."/>
            <person name="Liu J.-H."/>
            <person name="Zhang R."/>
            <person name="Joachimiak A."/>
            <person name="Wang J.-H."/>
            <person name="Lawler J."/>
        </authorList>
    </citation>
    <scope>X-RAY CRYSTALLOGRAPHY (1.45 ANGSTROMS) OF 19-233 IN COMPLEX WITH SYNTHETIC PENTAMERIC HEPARIN</scope>
    <scope>DISULFIDE BOND</scope>
</reference>
<reference key="41">
    <citation type="journal article" date="2008" name="J. Biol. Chem.">
        <title>Heparin-induced cis- and trans-dimerization modes of the thrombospondin-1 N-terminal domain.</title>
        <authorList>
            <person name="Tan K."/>
            <person name="Duquette M."/>
            <person name="Liu J.-H."/>
            <person name="Shanmugasundaram K."/>
            <person name="Joachimiak A."/>
            <person name="Gallagher J.T."/>
            <person name="Rigby A.C."/>
            <person name="Wang J.-H."/>
            <person name="Lawler J."/>
        </authorList>
    </citation>
    <scope>X-RAY CRYSTALLOGRAPHY (1.85 ANGSTROMS) OF 19-257 IN COMPLEXES WITH HEPARIN</scope>
    <scope>IDENTIFICATION BY MASS SPECTROMETRY</scope>
    <scope>GLYCOSYLATION AT ASN-248</scope>
</reference>
<name>TSP1_HUMAN</name>
<feature type="signal peptide">
    <location>
        <begin position="1"/>
        <end position="18"/>
    </location>
</feature>
<feature type="chain" id="PRO_0000035842" description="Thrombospondin-1">
    <location>
        <begin position="19"/>
        <end position="1170"/>
    </location>
</feature>
<feature type="domain" description="Laminin G-like">
    <location>
        <begin position="65"/>
        <end position="270"/>
    </location>
</feature>
<feature type="domain" description="VWFC" evidence="6">
    <location>
        <begin position="316"/>
        <end position="373"/>
    </location>
</feature>
<feature type="domain" description="TSP type-1 1" evidence="5">
    <location>
        <begin position="379"/>
        <end position="429"/>
    </location>
</feature>
<feature type="domain" description="TSP type-1 2" evidence="5">
    <location>
        <begin position="435"/>
        <end position="490"/>
    </location>
</feature>
<feature type="domain" description="TSP type-1 3" evidence="5">
    <location>
        <begin position="492"/>
        <end position="547"/>
    </location>
</feature>
<feature type="domain" description="EGF-like 1" evidence="4">
    <location>
        <begin position="547"/>
        <end position="587"/>
    </location>
</feature>
<feature type="domain" description="EGF-like 2" evidence="4">
    <location>
        <begin position="646"/>
        <end position="690"/>
    </location>
</feature>
<feature type="repeat" description="TSP type-3 1">
    <location>
        <begin position="691"/>
        <end position="726"/>
    </location>
</feature>
<feature type="repeat" description="TSP type-3 2">
    <location>
        <begin position="727"/>
        <end position="762"/>
    </location>
</feature>
<feature type="repeat" description="TSP type-3 3">
    <location>
        <begin position="763"/>
        <end position="785"/>
    </location>
</feature>
<feature type="repeat" description="TSP type-3 4">
    <location>
        <begin position="786"/>
        <end position="821"/>
    </location>
</feature>
<feature type="repeat" description="TSP type-3 5">
    <location>
        <begin position="822"/>
        <end position="844"/>
    </location>
</feature>
<feature type="repeat" description="TSP type-3 6">
    <location>
        <begin position="845"/>
        <end position="882"/>
    </location>
</feature>
<feature type="repeat" description="TSP type-3 7">
    <location>
        <begin position="883"/>
        <end position="918"/>
    </location>
</feature>
<feature type="repeat" description="TSP type-3 8">
    <location>
        <begin position="919"/>
        <end position="954"/>
    </location>
</feature>
<feature type="domain" description="TSP C-terminal" evidence="7">
    <location>
        <begin position="958"/>
        <end position="1170"/>
    </location>
</feature>
<feature type="region of interest" description="Heparin-binding">
    <location>
        <begin position="47"/>
        <end position="95"/>
    </location>
</feature>
<feature type="region of interest" description="Involved in retention in extracellular matrix (ECM); involved in trimer formation" evidence="23">
    <location>
        <begin position="531"/>
        <end position="1152"/>
    </location>
</feature>
<feature type="region of interest" description="Disordered" evidence="8">
    <location>
        <begin position="839"/>
        <end position="934"/>
    </location>
</feature>
<feature type="short sequence motif" description="Cell attachment site" evidence="42">
    <location>
        <begin position="926"/>
        <end position="928"/>
    </location>
</feature>
<feature type="compositionally biased region" description="Basic and acidic residues" evidence="8">
    <location>
        <begin position="840"/>
        <end position="854"/>
    </location>
</feature>
<feature type="compositionally biased region" description="Basic and acidic residues" evidence="8">
    <location>
        <begin position="883"/>
        <end position="894"/>
    </location>
</feature>
<feature type="compositionally biased region" description="Basic and acidic residues" evidence="8">
    <location>
        <begin position="917"/>
        <end position="934"/>
    </location>
</feature>
<feature type="glycosylation site" description="N-linked (GlcNAc...) asparagine" evidence="43 44 45">
    <location>
        <position position="248"/>
    </location>
</feature>
<feature type="glycosylation site" description="N-linked (GlcNAc...) asparagine" evidence="3">
    <location>
        <position position="360"/>
    </location>
</feature>
<feature type="glycosylation site" id="CAR_000205" description="C-linked (Man) tryptophan" evidence="11">
    <location>
        <position position="385"/>
    </location>
</feature>
<feature type="glycosylation site" id="CAR_000206" description="O-linked (Fuc...) serine" evidence="11">
    <location>
        <position position="394"/>
    </location>
</feature>
<feature type="glycosylation site" id="CAR_000207" description="C-linked (Man) tryptophan" evidence="11">
    <location>
        <position position="438"/>
    </location>
</feature>
<feature type="glycosylation site" id="CAR_000208" description="C-linked (Man) tryptophan" evidence="11">
    <location>
        <position position="441"/>
    </location>
</feature>
<feature type="glycosylation site" id="CAR_000209" description="O-linked (Fuc...) threonine" evidence="11 13">
    <location>
        <position position="450"/>
    </location>
</feature>
<feature type="glycosylation site" id="CAR_000210" description="C-linked (Man) tryptophan" evidence="11">
    <location>
        <position position="498"/>
    </location>
</feature>
<feature type="glycosylation site" id="CAR_000211" description="O-linked (Fuc...) threonine" evidence="11 13">
    <location>
        <position position="507"/>
    </location>
</feature>
<feature type="glycosylation site" description="O-linked (Xyl) serine" evidence="33">
    <location>
        <position position="553"/>
    </location>
</feature>
<feature type="glycosylation site" description="N-linked (GlcNAc...) asparagine" evidence="3">
    <location>
        <position position="708"/>
    </location>
</feature>
<feature type="glycosylation site" description="N-linked (GlcNAc...) asparagine" evidence="17 18 20 25">
    <location>
        <position position="1067"/>
    </location>
</feature>
<feature type="disulfide bond" evidence="19 22 49 50 51 52 53">
    <location>
        <begin position="171"/>
        <end position="232"/>
    </location>
</feature>
<feature type="disulfide bond" description="Interchain" evidence="42">
    <location>
        <position position="270"/>
    </location>
</feature>
<feature type="disulfide bond" description="Interchain" evidence="42">
    <location>
        <position position="274"/>
    </location>
</feature>
<feature type="disulfide bond">
    <location>
        <begin position="391"/>
        <end position="423"/>
    </location>
</feature>
<feature type="disulfide bond">
    <location>
        <begin position="395"/>
        <end position="428"/>
    </location>
</feature>
<feature type="disulfide bond">
    <location>
        <begin position="406"/>
        <end position="413"/>
    </location>
</feature>
<feature type="disulfide bond" evidence="13 47">
    <location>
        <begin position="447"/>
        <end position="484"/>
    </location>
</feature>
<feature type="disulfide bond" evidence="13 47">
    <location>
        <begin position="451"/>
        <end position="489"/>
    </location>
</feature>
<feature type="disulfide bond" evidence="13 47">
    <location>
        <begin position="462"/>
        <end position="474"/>
    </location>
</feature>
<feature type="disulfide bond" evidence="13 47">
    <location>
        <begin position="504"/>
        <end position="541"/>
    </location>
</feature>
<feature type="disulfide bond" evidence="13 47">
    <location>
        <begin position="508"/>
        <end position="546"/>
    </location>
</feature>
<feature type="disulfide bond" evidence="13 47">
    <location>
        <begin position="519"/>
        <end position="531"/>
    </location>
</feature>
<feature type="disulfide bond" evidence="1">
    <location>
        <begin position="551"/>
        <end position="562"/>
    </location>
</feature>
<feature type="disulfide bond" evidence="1">
    <location>
        <begin position="556"/>
        <end position="572"/>
    </location>
</feature>
<feature type="disulfide bond" evidence="1">
    <location>
        <begin position="575"/>
        <end position="586"/>
    </location>
</feature>
<feature type="disulfide bond" evidence="1">
    <location>
        <begin position="592"/>
        <end position="608"/>
    </location>
</feature>
<feature type="disulfide bond" evidence="1">
    <location>
        <begin position="599"/>
        <end position="617"/>
    </location>
</feature>
<feature type="disulfide bond" evidence="1">
    <location>
        <begin position="620"/>
        <end position="644"/>
    </location>
</feature>
<feature type="disulfide bond" evidence="1">
    <location>
        <begin position="650"/>
        <end position="663"/>
    </location>
</feature>
<feature type="disulfide bond" evidence="1">
    <location>
        <begin position="657"/>
        <end position="676"/>
    </location>
</feature>
<feature type="disulfide bond" evidence="1">
    <location>
        <begin position="678"/>
        <end position="689"/>
    </location>
</feature>
<feature type="disulfide bond" evidence="1">
    <location>
        <begin position="705"/>
        <end position="713"/>
    </location>
</feature>
<feature type="disulfide bond" evidence="1">
    <location>
        <begin position="718"/>
        <end position="738"/>
    </location>
</feature>
<feature type="disulfide bond" evidence="1">
    <location>
        <begin position="754"/>
        <end position="774"/>
    </location>
</feature>
<feature type="disulfide bond" evidence="1">
    <location>
        <begin position="777"/>
        <end position="797"/>
    </location>
</feature>
<feature type="disulfide bond" evidence="1">
    <location>
        <begin position="813"/>
        <end position="833"/>
    </location>
</feature>
<feature type="disulfide bond" evidence="17 48">
    <location>
        <begin position="836"/>
        <end position="856"/>
    </location>
</feature>
<feature type="disulfide bond" evidence="17 48">
    <location>
        <begin position="874"/>
        <end position="894"/>
    </location>
</feature>
<feature type="disulfide bond" evidence="17 48">
    <location>
        <begin position="910"/>
        <end position="930"/>
    </location>
</feature>
<feature type="disulfide bond" evidence="17 48">
    <location>
        <begin position="946"/>
        <end position="1167"/>
    </location>
</feature>
<feature type="splice variant" id="VSP_055757" description="In isoform 2." evidence="40">
    <location>
        <begin position="17"/>
        <end position="101"/>
    </location>
</feature>
<feature type="sequence variant" id="VAR_052657" description="In dbSNP:rs41515347.">
    <original>S</original>
    <variation>A</variation>
    <location>
        <position position="24"/>
    </location>
</feature>
<feature type="sequence variant" id="VAR_028938" description="In dbSNP:rs2292305." evidence="16 31">
    <original>T</original>
    <variation>A</variation>
    <location>
        <position position="523"/>
    </location>
</feature>
<feature type="sequence variant" id="VAR_028939" description="In dbSNP:rs2228262." evidence="39">
    <original>N</original>
    <variation>S</variation>
    <location>
        <position position="700"/>
    </location>
</feature>
<feature type="mutagenesis site" description="Reduces attachment to cells and retention in extracellular matrix (ECM); retention in ECM partially dependent on beta-1 integrin." evidence="23">
    <original>R</original>
    <variation>V</variation>
    <location>
        <position position="926"/>
    </location>
</feature>
<feature type="mutagenesis site" description="Reduces attachment to cells and retention in extracellular matrix." evidence="23">
    <original>DDD</original>
    <variation>AAA</variation>
    <location>
        <begin position="1019"/>
        <end position="1021"/>
    </location>
</feature>
<feature type="mutagenesis site" description="Loss of N-glycosylation site." evidence="17">
    <original>N</original>
    <variation>K</variation>
    <location>
        <position position="1067"/>
    </location>
</feature>
<feature type="sequence conflict" description="In Ref. 3; BAG65509." evidence="42" ref="3">
    <original>A</original>
    <variation>S</variation>
    <location>
        <position position="4"/>
    </location>
</feature>
<feature type="sequence conflict" description="In Ref. 1; CAA28370 and 9; AAA61178." evidence="42" ref="1 9">
    <original>A</original>
    <variation>T</variation>
    <location>
        <position position="84"/>
    </location>
</feature>
<feature type="sequence conflict" description="In Ref. 3; BAG65509." evidence="42" ref="3">
    <original>R</original>
    <variation>I</variation>
    <location>
        <position position="431"/>
    </location>
</feature>
<feature type="sequence conflict" description="In Ref. 3; BAG65509." evidence="42" ref="3">
    <original>C</original>
    <variation>R</variation>
    <location>
        <position position="451"/>
    </location>
</feature>
<feature type="sequence conflict" description="In Ref. 3; BAF84328." evidence="42" ref="3">
    <original>C</original>
    <variation>Y</variation>
    <location>
        <position position="546"/>
    </location>
</feature>
<feature type="sequence conflict" description="In Ref. 3; BAG65509." evidence="42" ref="3">
    <original>N</original>
    <variation>D</variation>
    <location>
        <position position="812"/>
    </location>
</feature>
<feature type="sequence conflict" description="In Ref. 3; BAF84328." evidence="42" ref="3">
    <original>F</original>
    <variation>S</variation>
    <location>
        <position position="1008"/>
    </location>
</feature>
<feature type="strand" evidence="56">
    <location>
        <begin position="30"/>
        <end position="32"/>
    </location>
</feature>
<feature type="helix" evidence="56">
    <location>
        <begin position="33"/>
        <end position="37"/>
    </location>
</feature>
<feature type="turn" evidence="56">
    <location>
        <begin position="38"/>
        <end position="41"/>
    </location>
</feature>
<feature type="strand" evidence="56">
    <location>
        <begin position="44"/>
        <end position="49"/>
    </location>
</feature>
<feature type="strand" evidence="56">
    <location>
        <begin position="58"/>
        <end position="62"/>
    </location>
</feature>
<feature type="helix" evidence="56">
    <location>
        <begin position="64"/>
        <end position="66"/>
    </location>
</feature>
<feature type="helix" evidence="56">
    <location>
        <begin position="72"/>
        <end position="85"/>
    </location>
</feature>
<feature type="strand" evidence="56">
    <location>
        <begin position="87"/>
        <end position="96"/>
    </location>
</feature>
<feature type="strand" evidence="56">
    <location>
        <begin position="101"/>
        <end position="109"/>
    </location>
</feature>
<feature type="strand" evidence="56">
    <location>
        <begin position="115"/>
        <end position="122"/>
    </location>
</feature>
<feature type="turn" evidence="56">
    <location>
        <begin position="123"/>
        <end position="126"/>
    </location>
</feature>
<feature type="strand" evidence="56">
    <location>
        <begin position="127"/>
        <end position="134"/>
    </location>
</feature>
<feature type="strand" evidence="56">
    <location>
        <begin position="137"/>
        <end position="145"/>
    </location>
</feature>
<feature type="strand" evidence="56">
    <location>
        <begin position="150"/>
        <end position="161"/>
    </location>
</feature>
<feature type="strand" evidence="56">
    <location>
        <begin position="164"/>
        <end position="169"/>
    </location>
</feature>
<feature type="turn" evidence="56">
    <location>
        <begin position="170"/>
        <end position="172"/>
    </location>
</feature>
<feature type="strand" evidence="56">
    <location>
        <begin position="173"/>
        <end position="178"/>
    </location>
</feature>
<feature type="helix" evidence="56">
    <location>
        <begin position="183"/>
        <end position="185"/>
    </location>
</feature>
<feature type="helix" evidence="56">
    <location>
        <begin position="191"/>
        <end position="194"/>
    </location>
</feature>
<feature type="strand" evidence="56">
    <location>
        <begin position="195"/>
        <end position="200"/>
    </location>
</feature>
<feature type="turn" evidence="56">
    <location>
        <begin position="203"/>
        <end position="205"/>
    </location>
</feature>
<feature type="strand" evidence="56">
    <location>
        <begin position="210"/>
        <end position="218"/>
    </location>
</feature>
<feature type="helix" evidence="56">
    <location>
        <begin position="223"/>
        <end position="228"/>
    </location>
</feature>
<feature type="turn" evidence="57">
    <location>
        <begin position="229"/>
        <end position="231"/>
    </location>
</feature>
<feature type="strand" evidence="58">
    <location>
        <begin position="394"/>
        <end position="403"/>
    </location>
</feature>
<feature type="turn" evidence="58">
    <location>
        <begin position="408"/>
        <end position="410"/>
    </location>
</feature>
<feature type="strand" evidence="58">
    <location>
        <begin position="417"/>
        <end position="424"/>
    </location>
</feature>
<feature type="strand" evidence="54">
    <location>
        <begin position="450"/>
        <end position="459"/>
    </location>
</feature>
<feature type="strand" evidence="59">
    <location>
        <begin position="469"/>
        <end position="471"/>
    </location>
</feature>
<feature type="strand" evidence="54">
    <location>
        <begin position="478"/>
        <end position="485"/>
    </location>
</feature>
<feature type="strand" evidence="54">
    <location>
        <begin position="507"/>
        <end position="509"/>
    </location>
</feature>
<feature type="strand" evidence="54">
    <location>
        <begin position="511"/>
        <end position="516"/>
    </location>
</feature>
<feature type="strand" evidence="54">
    <location>
        <begin position="535"/>
        <end position="541"/>
    </location>
</feature>
<feature type="turn" evidence="55">
    <location>
        <begin position="838"/>
        <end position="840"/>
    </location>
</feature>
<feature type="strand" evidence="55">
    <location>
        <begin position="849"/>
        <end position="852"/>
    </location>
</feature>
<feature type="turn" evidence="55">
    <location>
        <begin position="854"/>
        <end position="856"/>
    </location>
</feature>
<feature type="strand" evidence="55">
    <location>
        <begin position="865"/>
        <end position="867"/>
    </location>
</feature>
<feature type="helix" evidence="55">
    <location>
        <begin position="869"/>
        <end position="871"/>
    </location>
</feature>
<feature type="strand" evidence="55">
    <location>
        <begin position="888"/>
        <end position="890"/>
    </location>
</feature>
<feature type="helix" evidence="55">
    <location>
        <begin position="892"/>
        <end position="894"/>
    </location>
</feature>
<feature type="strand" evidence="55">
    <location>
        <begin position="901"/>
        <end position="903"/>
    </location>
</feature>
<feature type="helix" evidence="55">
    <location>
        <begin position="905"/>
        <end position="907"/>
    </location>
</feature>
<feature type="turn" evidence="55">
    <location>
        <begin position="909"/>
        <end position="912"/>
    </location>
</feature>
<feature type="strand" evidence="55">
    <location>
        <begin position="924"/>
        <end position="926"/>
    </location>
</feature>
<feature type="helix" evidence="55">
    <location>
        <begin position="928"/>
        <end position="930"/>
    </location>
</feature>
<feature type="strand" evidence="55">
    <location>
        <begin position="937"/>
        <end position="939"/>
    </location>
</feature>
<feature type="turn" evidence="55">
    <location>
        <begin position="941"/>
        <end position="943"/>
    </location>
</feature>
<feature type="strand" evidence="55">
    <location>
        <begin position="961"/>
        <end position="965"/>
    </location>
</feature>
<feature type="strand" evidence="55">
    <location>
        <begin position="986"/>
        <end position="988"/>
    </location>
</feature>
<feature type="strand" evidence="55">
    <location>
        <begin position="995"/>
        <end position="1014"/>
    </location>
</feature>
<feature type="strand" evidence="55">
    <location>
        <begin position="1022"/>
        <end position="1031"/>
    </location>
</feature>
<feature type="strand" evidence="55">
    <location>
        <begin position="1034"/>
        <end position="1043"/>
    </location>
</feature>
<feature type="strand" evidence="55">
    <location>
        <begin position="1051"/>
        <end position="1053"/>
    </location>
</feature>
<feature type="strand" evidence="55">
    <location>
        <begin position="1059"/>
        <end position="1067"/>
    </location>
</feature>
<feature type="helix" evidence="55">
    <location>
        <begin position="1074"/>
        <end position="1081"/>
    </location>
</feature>
<feature type="strand" evidence="55">
    <location>
        <begin position="1082"/>
        <end position="1084"/>
    </location>
</feature>
<feature type="turn" evidence="55">
    <location>
        <begin position="1087"/>
        <end position="1089"/>
    </location>
</feature>
<feature type="strand" evidence="55">
    <location>
        <begin position="1090"/>
        <end position="1095"/>
    </location>
</feature>
<feature type="strand" evidence="55">
    <location>
        <begin position="1107"/>
        <end position="1115"/>
    </location>
</feature>
<feature type="turn" evidence="55">
    <location>
        <begin position="1116"/>
        <end position="1119"/>
    </location>
</feature>
<feature type="strand" evidence="55">
    <location>
        <begin position="1120"/>
        <end position="1127"/>
    </location>
</feature>
<feature type="strand" evidence="55">
    <location>
        <begin position="1130"/>
        <end position="1134"/>
    </location>
</feature>
<feature type="strand" evidence="55">
    <location>
        <begin position="1146"/>
        <end position="1154"/>
    </location>
</feature>
<feature type="strand" evidence="55">
    <location>
        <begin position="1156"/>
        <end position="1167"/>
    </location>
</feature>
<proteinExistence type="evidence at protein level"/>
<dbReference type="EMBL" id="X04665">
    <property type="protein sequence ID" value="CAA28370.1"/>
    <property type="molecule type" value="mRNA"/>
</dbReference>
<dbReference type="EMBL" id="X14787">
    <property type="protein sequence ID" value="CAA32889.1"/>
    <property type="molecule type" value="mRNA"/>
</dbReference>
<dbReference type="EMBL" id="AK291639">
    <property type="protein sequence ID" value="BAF84328.1"/>
    <property type="molecule type" value="mRNA"/>
</dbReference>
<dbReference type="EMBL" id="AK304754">
    <property type="protein sequence ID" value="BAG65509.1"/>
    <property type="molecule type" value="mRNA"/>
</dbReference>
<dbReference type="EMBL" id="AB209912">
    <property type="protein sequence ID" value="BAD93149.1"/>
    <property type="status" value="ALT_INIT"/>
    <property type="molecule type" value="mRNA"/>
</dbReference>
<dbReference type="EMBL" id="AC037198">
    <property type="status" value="NOT_ANNOTATED_CDS"/>
    <property type="molecule type" value="Genomic_DNA"/>
</dbReference>
<dbReference type="EMBL" id="BC136469">
    <property type="protein sequence ID" value="AAI36470.1"/>
    <property type="molecule type" value="mRNA"/>
</dbReference>
<dbReference type="EMBL" id="BC136470">
    <property type="protein sequence ID" value="AAI36471.1"/>
    <property type="molecule type" value="mRNA"/>
</dbReference>
<dbReference type="EMBL" id="M25631">
    <property type="protein sequence ID" value="AAA36741.1"/>
    <property type="molecule type" value="mRNA"/>
</dbReference>
<dbReference type="EMBL" id="M14326">
    <property type="protein sequence ID" value="AAA61237.1"/>
    <property type="status" value="ALT_SEQ"/>
    <property type="molecule type" value="mRNA"/>
</dbReference>
<dbReference type="EMBL" id="J04835">
    <property type="protein sequence ID" value="AAA61178.1"/>
    <property type="molecule type" value="Genomic_DNA"/>
</dbReference>
<dbReference type="EMBL" id="M99425">
    <property type="protein sequence ID" value="AAB59366.1"/>
    <property type="molecule type" value="mRNA"/>
</dbReference>
<dbReference type="CCDS" id="CCDS32194.1">
    <molecule id="P07996-1"/>
</dbReference>
<dbReference type="PIR" id="A26155">
    <property type="entry name" value="TSHUP1"/>
</dbReference>
<dbReference type="RefSeq" id="NP_003237.2">
    <molecule id="P07996-1"/>
    <property type="nucleotide sequence ID" value="NM_003246.3"/>
</dbReference>
<dbReference type="RefSeq" id="XP_047288936.1">
    <molecule id="P07996-1"/>
    <property type="nucleotide sequence ID" value="XM_047432980.1"/>
</dbReference>
<dbReference type="RefSeq" id="XP_054234660.1">
    <molecule id="P07996-1"/>
    <property type="nucleotide sequence ID" value="XM_054378685.1"/>
</dbReference>
<dbReference type="PDB" id="1LSL">
    <property type="method" value="X-ray"/>
    <property type="resolution" value="1.90 A"/>
    <property type="chains" value="A=434-546"/>
</dbReference>
<dbReference type="PDB" id="1UX6">
    <property type="method" value="X-ray"/>
    <property type="resolution" value="1.90 A"/>
    <property type="chains" value="A=834-1170"/>
</dbReference>
<dbReference type="PDB" id="1Z78">
    <property type="method" value="X-ray"/>
    <property type="resolution" value="1.80 A"/>
    <property type="chains" value="A=19-233"/>
</dbReference>
<dbReference type="PDB" id="1ZA4">
    <property type="method" value="X-ray"/>
    <property type="resolution" value="1.90 A"/>
    <property type="chains" value="A=19-257"/>
</dbReference>
<dbReference type="PDB" id="2ERF">
    <property type="method" value="X-ray"/>
    <property type="resolution" value="1.45 A"/>
    <property type="chains" value="A=25-233"/>
</dbReference>
<dbReference type="PDB" id="2ES3">
    <property type="method" value="X-ray"/>
    <property type="resolution" value="1.85 A"/>
    <property type="chains" value="A/B=25-233"/>
</dbReference>
<dbReference type="PDB" id="2OUH">
    <property type="method" value="X-ray"/>
    <property type="resolution" value="2.40 A"/>
    <property type="chains" value="A/B=19-257"/>
</dbReference>
<dbReference type="PDB" id="2OUJ">
    <property type="method" value="X-ray"/>
    <property type="resolution" value="1.90 A"/>
    <property type="chains" value="A=19-257"/>
</dbReference>
<dbReference type="PDB" id="3R6B">
    <property type="method" value="X-ray"/>
    <property type="resolution" value="2.40 A"/>
    <property type="chains" value="A=434-547"/>
</dbReference>
<dbReference type="PDB" id="5FOE">
    <property type="method" value="X-ray"/>
    <property type="resolution" value="1.98 A"/>
    <property type="chains" value="A/B=378-429"/>
</dbReference>
<dbReference type="PDB" id="7YYK">
    <property type="method" value="X-ray"/>
    <property type="resolution" value="2.60 A"/>
    <property type="chains" value="A=378-547"/>
</dbReference>
<dbReference type="PDBsum" id="1LSL"/>
<dbReference type="PDBsum" id="1UX6"/>
<dbReference type="PDBsum" id="1Z78"/>
<dbReference type="PDBsum" id="1ZA4"/>
<dbReference type="PDBsum" id="2ERF"/>
<dbReference type="PDBsum" id="2ES3"/>
<dbReference type="PDBsum" id="2OUH"/>
<dbReference type="PDBsum" id="2OUJ"/>
<dbReference type="PDBsum" id="3R6B"/>
<dbReference type="PDBsum" id="5FOE"/>
<dbReference type="PDBsum" id="7YYK"/>
<dbReference type="SMR" id="P07996"/>
<dbReference type="BioGRID" id="112915">
    <property type="interactions" value="125"/>
</dbReference>
<dbReference type="ComplexPortal" id="CPX-1785">
    <property type="entry name" value="Thrombospondin 1 complex"/>
</dbReference>
<dbReference type="CORUM" id="P07996"/>
<dbReference type="DIP" id="DIP-1037N"/>
<dbReference type="FunCoup" id="P07996">
    <property type="interactions" value="1163"/>
</dbReference>
<dbReference type="IntAct" id="P07996">
    <property type="interactions" value="61"/>
</dbReference>
<dbReference type="MINT" id="P07996"/>
<dbReference type="STRING" id="9606.ENSP00000260356"/>
<dbReference type="BindingDB" id="P07996"/>
<dbReference type="ChEMBL" id="CHEMBL4630810"/>
<dbReference type="DrugBank" id="DB05434">
    <property type="generic name" value="ABT-510"/>
</dbReference>
<dbReference type="GlyConnect" id="594">
    <property type="glycosylation" value="88 N-Linked glycans (6 sites), 1 O-Fuc glycan (1 site), 1 O-Linked glycan (3 sites)"/>
</dbReference>
<dbReference type="GlyCosmos" id="P07996">
    <property type="glycosylation" value="15 sites, 94 glycans"/>
</dbReference>
<dbReference type="GlyGen" id="P07996">
    <property type="glycosylation" value="23 sites, 207 N-linked glycans (6 sites), 7 O-linked glycans (12 sites)"/>
</dbReference>
<dbReference type="iPTMnet" id="P07996"/>
<dbReference type="MetOSite" id="P07996"/>
<dbReference type="PhosphoSitePlus" id="P07996"/>
<dbReference type="SwissPalm" id="P07996"/>
<dbReference type="BioMuta" id="THBS1"/>
<dbReference type="DMDM" id="117949802"/>
<dbReference type="OGP" id="P07996"/>
<dbReference type="CPTAC" id="non-CPTAC-1162"/>
<dbReference type="jPOST" id="P07996"/>
<dbReference type="MassIVE" id="P07996"/>
<dbReference type="PaxDb" id="9606-ENSP00000260356"/>
<dbReference type="PeptideAtlas" id="P07996"/>
<dbReference type="ProteomicsDB" id="52058">
    <molecule id="P07996-1"/>
</dbReference>
<dbReference type="Pumba" id="P07996"/>
<dbReference type="ABCD" id="P07996">
    <property type="antibodies" value="6 sequenced antibodies"/>
</dbReference>
<dbReference type="Antibodypedia" id="9950">
    <property type="antibodies" value="715 antibodies from 38 providers"/>
</dbReference>
<dbReference type="DNASU" id="7057"/>
<dbReference type="Ensembl" id="ENST00000260356.6">
    <molecule id="P07996-1"/>
    <property type="protein sequence ID" value="ENSP00000260356.5"/>
    <property type="gene ID" value="ENSG00000137801.11"/>
</dbReference>
<dbReference type="GeneID" id="7057"/>
<dbReference type="KEGG" id="hsa:7057"/>
<dbReference type="MANE-Select" id="ENST00000260356.6">
    <property type="protein sequence ID" value="ENSP00000260356.5"/>
    <property type="RefSeq nucleotide sequence ID" value="NM_003246.4"/>
    <property type="RefSeq protein sequence ID" value="NP_003237.2"/>
</dbReference>
<dbReference type="UCSC" id="uc001zkh.4">
    <molecule id="P07996-1"/>
    <property type="organism name" value="human"/>
</dbReference>
<dbReference type="AGR" id="HGNC:11785"/>
<dbReference type="CTD" id="7057"/>
<dbReference type="DisGeNET" id="7057"/>
<dbReference type="GeneCards" id="THBS1"/>
<dbReference type="HGNC" id="HGNC:11785">
    <property type="gene designation" value="THBS1"/>
</dbReference>
<dbReference type="HPA" id="ENSG00000137801">
    <property type="expression patterns" value="Low tissue specificity"/>
</dbReference>
<dbReference type="MalaCards" id="THBS1"/>
<dbReference type="MIM" id="188060">
    <property type="type" value="gene"/>
</dbReference>
<dbReference type="neXtProt" id="NX_P07996"/>
<dbReference type="OpenTargets" id="ENSG00000137801"/>
<dbReference type="PharmGKB" id="PA36497"/>
<dbReference type="VEuPathDB" id="HostDB:ENSG00000137801"/>
<dbReference type="eggNOG" id="ENOG502QRK8">
    <property type="taxonomic scope" value="Eukaryota"/>
</dbReference>
<dbReference type="GeneTree" id="ENSGT00940000155832"/>
<dbReference type="HOGENOM" id="CLU_009257_0_0_1"/>
<dbReference type="InParanoid" id="P07996"/>
<dbReference type="OMA" id="ITQTYWD"/>
<dbReference type="OrthoDB" id="14563at2759"/>
<dbReference type="PAN-GO" id="P07996">
    <property type="GO annotations" value="2 GO annotations based on evolutionary models"/>
</dbReference>
<dbReference type="PhylomeDB" id="P07996"/>
<dbReference type="TreeFam" id="TF324917"/>
<dbReference type="PathwayCommons" id="P07996"/>
<dbReference type="Reactome" id="R-HSA-114608">
    <property type="pathway name" value="Platelet degranulation"/>
</dbReference>
<dbReference type="Reactome" id="R-HSA-186797">
    <property type="pathway name" value="Signaling by PDGF"/>
</dbReference>
<dbReference type="Reactome" id="R-HSA-216083">
    <property type="pathway name" value="Integrin cell surface interactions"/>
</dbReference>
<dbReference type="Reactome" id="R-HSA-3000170">
    <property type="pathway name" value="Syndecan interactions"/>
</dbReference>
<dbReference type="Reactome" id="R-HSA-5083635">
    <property type="pathway name" value="Defective B3GALTL causes PpS"/>
</dbReference>
<dbReference type="Reactome" id="R-HSA-5173214">
    <property type="pathway name" value="O-glycosylation of TSR domain-containing proteins"/>
</dbReference>
<dbReference type="Reactome" id="R-HSA-8936459">
    <property type="pathway name" value="RUNX1 regulates genes involved in megakaryocyte differentiation and platelet function"/>
</dbReference>
<dbReference type="SignaLink" id="P07996"/>
<dbReference type="SIGNOR" id="P07996"/>
<dbReference type="BioGRID-ORCS" id="7057">
    <property type="hits" value="10 hits in 1076 CRISPR screens"/>
</dbReference>
<dbReference type="ChiTaRS" id="THBS1">
    <property type="organism name" value="human"/>
</dbReference>
<dbReference type="EvolutionaryTrace" id="P07996"/>
<dbReference type="GeneWiki" id="Thrombospondin_1"/>
<dbReference type="GenomeRNAi" id="7057"/>
<dbReference type="Pharos" id="P07996">
    <property type="development level" value="Tchem"/>
</dbReference>
<dbReference type="PRO" id="PR:P07996"/>
<dbReference type="Proteomes" id="UP000005640">
    <property type="component" value="Chromosome 15"/>
</dbReference>
<dbReference type="RNAct" id="P07996">
    <property type="molecule type" value="protein"/>
</dbReference>
<dbReference type="Bgee" id="ENSG00000137801">
    <property type="expression patterns" value="Expressed in stromal cell of endometrium and 190 other cell types or tissues"/>
</dbReference>
<dbReference type="ExpressionAtlas" id="P07996">
    <property type="expression patterns" value="baseline and differential"/>
</dbReference>
<dbReference type="GO" id="GO:0009986">
    <property type="term" value="C:cell surface"/>
    <property type="evidence" value="ECO:0000314"/>
    <property type="project" value="BHF-UCL"/>
</dbReference>
<dbReference type="GO" id="GO:0062023">
    <property type="term" value="C:collagen-containing extracellular matrix"/>
    <property type="evidence" value="ECO:0007005"/>
    <property type="project" value="UniProtKB"/>
</dbReference>
<dbReference type="GO" id="GO:0005783">
    <property type="term" value="C:endoplasmic reticulum"/>
    <property type="evidence" value="ECO:0000250"/>
    <property type="project" value="UniProtKB"/>
</dbReference>
<dbReference type="GO" id="GO:0005788">
    <property type="term" value="C:endoplasmic reticulum lumen"/>
    <property type="evidence" value="ECO:0000304"/>
    <property type="project" value="Reactome"/>
</dbReference>
<dbReference type="GO" id="GO:0009897">
    <property type="term" value="C:external side of plasma membrane"/>
    <property type="evidence" value="ECO:0000314"/>
    <property type="project" value="BHF-UCL"/>
</dbReference>
<dbReference type="GO" id="GO:0070062">
    <property type="term" value="C:extracellular exosome"/>
    <property type="evidence" value="ECO:0007005"/>
    <property type="project" value="UniProtKB"/>
</dbReference>
<dbReference type="GO" id="GO:0031012">
    <property type="term" value="C:extracellular matrix"/>
    <property type="evidence" value="ECO:0000314"/>
    <property type="project" value="UniProtKB"/>
</dbReference>
<dbReference type="GO" id="GO:0005576">
    <property type="term" value="C:extracellular region"/>
    <property type="evidence" value="ECO:0007005"/>
    <property type="project" value="BHF-UCL"/>
</dbReference>
<dbReference type="GO" id="GO:0005615">
    <property type="term" value="C:extracellular space"/>
    <property type="evidence" value="ECO:0000314"/>
    <property type="project" value="BHF-UCL"/>
</dbReference>
<dbReference type="GO" id="GO:0005577">
    <property type="term" value="C:fibrinogen complex"/>
    <property type="evidence" value="ECO:0000314"/>
    <property type="project" value="BHF-UCL"/>
</dbReference>
<dbReference type="GO" id="GO:0031091">
    <property type="term" value="C:platelet alpha granule"/>
    <property type="evidence" value="ECO:0000314"/>
    <property type="project" value="BHF-UCL"/>
</dbReference>
<dbReference type="GO" id="GO:0031093">
    <property type="term" value="C:platelet alpha granule lumen"/>
    <property type="evidence" value="ECO:0000304"/>
    <property type="project" value="Reactome"/>
</dbReference>
<dbReference type="GO" id="GO:0016529">
    <property type="term" value="C:sarcoplasmic reticulum"/>
    <property type="evidence" value="ECO:0000250"/>
    <property type="project" value="UniProtKB"/>
</dbReference>
<dbReference type="GO" id="GO:0030141">
    <property type="term" value="C:secretory granule"/>
    <property type="evidence" value="ECO:0000314"/>
    <property type="project" value="BHF-UCL"/>
</dbReference>
<dbReference type="GO" id="GO:0005509">
    <property type="term" value="F:calcium ion binding"/>
    <property type="evidence" value="ECO:0000303"/>
    <property type="project" value="BHF-UCL"/>
</dbReference>
<dbReference type="GO" id="GO:0070052">
    <property type="term" value="F:collagen V binding"/>
    <property type="evidence" value="ECO:0000314"/>
    <property type="project" value="BHF-UCL"/>
</dbReference>
<dbReference type="GO" id="GO:0004866">
    <property type="term" value="F:endopeptidase inhibitor activity"/>
    <property type="evidence" value="ECO:0000314"/>
    <property type="project" value="BHF-UCL"/>
</dbReference>
<dbReference type="GO" id="GO:0005201">
    <property type="term" value="F:extracellular matrix structural constituent"/>
    <property type="evidence" value="ECO:0007005"/>
    <property type="project" value="BHF-UCL"/>
</dbReference>
<dbReference type="GO" id="GO:0070051">
    <property type="term" value="F:fibrinogen binding"/>
    <property type="evidence" value="ECO:0000314"/>
    <property type="project" value="UniProtKB"/>
</dbReference>
<dbReference type="GO" id="GO:0017134">
    <property type="term" value="F:fibroblast growth factor binding"/>
    <property type="evidence" value="ECO:0000314"/>
    <property type="project" value="BHF-UCL"/>
</dbReference>
<dbReference type="GO" id="GO:0001968">
    <property type="term" value="F:fibronectin binding"/>
    <property type="evidence" value="ECO:0000314"/>
    <property type="project" value="UniProtKB"/>
</dbReference>
<dbReference type="GO" id="GO:0008201">
    <property type="term" value="F:heparin binding"/>
    <property type="evidence" value="ECO:0000314"/>
    <property type="project" value="BHF-UCL"/>
</dbReference>
<dbReference type="GO" id="GO:0005178">
    <property type="term" value="F:integrin binding"/>
    <property type="evidence" value="ECO:0000315"/>
    <property type="project" value="BHF-UCL"/>
</dbReference>
<dbReference type="GO" id="GO:0043236">
    <property type="term" value="F:laminin binding"/>
    <property type="evidence" value="ECO:0000314"/>
    <property type="project" value="BHF-UCL"/>
</dbReference>
<dbReference type="GO" id="GO:0030169">
    <property type="term" value="F:low-density lipoprotein particle binding"/>
    <property type="evidence" value="ECO:0000314"/>
    <property type="project" value="BHF-UCL"/>
</dbReference>
<dbReference type="GO" id="GO:0001786">
    <property type="term" value="F:phosphatidylserine binding"/>
    <property type="evidence" value="ECO:0000314"/>
    <property type="project" value="UniProtKB"/>
</dbReference>
<dbReference type="GO" id="GO:0002020">
    <property type="term" value="F:protease binding"/>
    <property type="evidence" value="ECO:0000353"/>
    <property type="project" value="BHF-UCL"/>
</dbReference>
<dbReference type="GO" id="GO:0042803">
    <property type="term" value="F:protein homodimerization activity"/>
    <property type="evidence" value="ECO:0000353"/>
    <property type="project" value="BHF-UCL"/>
</dbReference>
<dbReference type="GO" id="GO:0043394">
    <property type="term" value="F:proteoglycan binding"/>
    <property type="evidence" value="ECO:0000304"/>
    <property type="project" value="BHF-UCL"/>
</dbReference>
<dbReference type="GO" id="GO:0050431">
    <property type="term" value="F:transforming growth factor beta binding"/>
    <property type="evidence" value="ECO:0000250"/>
    <property type="project" value="BHF-UCL"/>
</dbReference>
<dbReference type="GO" id="GO:0006915">
    <property type="term" value="P:apoptotic process"/>
    <property type="evidence" value="ECO:0007669"/>
    <property type="project" value="UniProtKB-KW"/>
</dbReference>
<dbReference type="GO" id="GO:0048266">
    <property type="term" value="P:behavioral response to pain"/>
    <property type="evidence" value="ECO:0000250"/>
    <property type="project" value="UniProtKB"/>
</dbReference>
<dbReference type="GO" id="GO:0007155">
    <property type="term" value="P:cell adhesion"/>
    <property type="evidence" value="ECO:0000303"/>
    <property type="project" value="BHF-UCL"/>
</dbReference>
<dbReference type="GO" id="GO:0016477">
    <property type="term" value="P:cell migration"/>
    <property type="evidence" value="ECO:0000314"/>
    <property type="project" value="BHF-UCL"/>
</dbReference>
<dbReference type="GO" id="GO:0071363">
    <property type="term" value="P:cellular response to growth factor stimulus"/>
    <property type="evidence" value="ECO:0007669"/>
    <property type="project" value="Ensembl"/>
</dbReference>
<dbReference type="GO" id="GO:0034605">
    <property type="term" value="P:cellular response to heat"/>
    <property type="evidence" value="ECO:0000303"/>
    <property type="project" value="BHF-UCL"/>
</dbReference>
<dbReference type="GO" id="GO:0071356">
    <property type="term" value="P:cellular response to tumor necrosis factor"/>
    <property type="evidence" value="ECO:0007669"/>
    <property type="project" value="Ensembl"/>
</dbReference>
<dbReference type="GO" id="GO:0002544">
    <property type="term" value="P:chronic inflammatory response"/>
    <property type="evidence" value="ECO:0000270"/>
    <property type="project" value="BHF-UCL"/>
</dbReference>
<dbReference type="GO" id="GO:0043652">
    <property type="term" value="P:engulfment of apoptotic cell"/>
    <property type="evidence" value="ECO:0000314"/>
    <property type="project" value="BHF-UCL"/>
</dbReference>
<dbReference type="GO" id="GO:0006955">
    <property type="term" value="P:immune response"/>
    <property type="evidence" value="ECO:0000270"/>
    <property type="project" value="BHF-UCL"/>
</dbReference>
<dbReference type="GO" id="GO:0006954">
    <property type="term" value="P:inflammatory response"/>
    <property type="evidence" value="ECO:0000314"/>
    <property type="project" value="CACAO"/>
</dbReference>
<dbReference type="GO" id="GO:0016525">
    <property type="term" value="P:negative regulation of angiogenesis"/>
    <property type="evidence" value="ECO:0000314"/>
    <property type="project" value="UniProtKB"/>
</dbReference>
<dbReference type="GO" id="GO:0002581">
    <property type="term" value="P:negative regulation of antigen processing and presentation of peptide or polysaccharide antigen via MHC class II"/>
    <property type="evidence" value="ECO:0000314"/>
    <property type="project" value="BHF-UCL"/>
</dbReference>
<dbReference type="GO" id="GO:0043066">
    <property type="term" value="P:negative regulation of apoptotic process"/>
    <property type="evidence" value="ECO:0000314"/>
    <property type="project" value="UniProtKB"/>
</dbReference>
<dbReference type="GO" id="GO:0043537">
    <property type="term" value="P:negative regulation of blood vessel endothelial cell migration"/>
    <property type="evidence" value="ECO:0000314"/>
    <property type="project" value="BHF-UCL"/>
</dbReference>
<dbReference type="GO" id="GO:1903588">
    <property type="term" value="P:negative regulation of blood vessel endothelial cell proliferation involved in sprouting angiogenesis"/>
    <property type="evidence" value="ECO:0000315"/>
    <property type="project" value="BHF-UCL"/>
</dbReference>
<dbReference type="GO" id="GO:0090051">
    <property type="term" value="P:negative regulation of cell migration involved in sprouting angiogenesis"/>
    <property type="evidence" value="ECO:0000315"/>
    <property type="project" value="BHF-UCL"/>
</dbReference>
<dbReference type="GO" id="GO:0008285">
    <property type="term" value="P:negative regulation of cell population proliferation"/>
    <property type="evidence" value="ECO:0000314"/>
    <property type="project" value="BHF-UCL"/>
</dbReference>
<dbReference type="GO" id="GO:0001953">
    <property type="term" value="P:negative regulation of cell-matrix adhesion"/>
    <property type="evidence" value="ECO:0000314"/>
    <property type="project" value="MGI"/>
</dbReference>
<dbReference type="GO" id="GO:0010754">
    <property type="term" value="P:negative regulation of cGMP-mediated signaling"/>
    <property type="evidence" value="ECO:0000314"/>
    <property type="project" value="UniProtKB"/>
</dbReference>
<dbReference type="GO" id="GO:0002605">
    <property type="term" value="P:negative regulation of dendritic cell antigen processing and presentation"/>
    <property type="evidence" value="ECO:0000314"/>
    <property type="project" value="BHF-UCL"/>
</dbReference>
<dbReference type="GO" id="GO:2001027">
    <property type="term" value="P:negative regulation of endothelial cell chemotaxis"/>
    <property type="evidence" value="ECO:0000314"/>
    <property type="project" value="MGI"/>
</dbReference>
<dbReference type="GO" id="GO:0010596">
    <property type="term" value="P:negative regulation of endothelial cell migration"/>
    <property type="evidence" value="ECO:0000314"/>
    <property type="project" value="BHF-UCL"/>
</dbReference>
<dbReference type="GO" id="GO:0001937">
    <property type="term" value="P:negative regulation of endothelial cell proliferation"/>
    <property type="evidence" value="ECO:0000314"/>
    <property type="project" value="MGI"/>
</dbReference>
<dbReference type="GO" id="GO:2001237">
    <property type="term" value="P:negative regulation of extrinsic apoptotic signaling pathway"/>
    <property type="evidence" value="ECO:0000304"/>
    <property type="project" value="BHF-UCL"/>
</dbReference>
<dbReference type="GO" id="GO:0051918">
    <property type="term" value="P:negative regulation of fibrinolysis"/>
    <property type="evidence" value="ECO:0000314"/>
    <property type="project" value="BHF-UCL"/>
</dbReference>
<dbReference type="GO" id="GO:0040037">
    <property type="term" value="P:negative regulation of fibroblast growth factor receptor signaling pathway"/>
    <property type="evidence" value="ECO:0000314"/>
    <property type="project" value="BHF-UCL"/>
</dbReference>
<dbReference type="GO" id="GO:0051895">
    <property type="term" value="P:negative regulation of focal adhesion assembly"/>
    <property type="evidence" value="ECO:0000304"/>
    <property type="project" value="BHF-UCL"/>
</dbReference>
<dbReference type="GO" id="GO:0032693">
    <property type="term" value="P:negative regulation of interleukin-10 production"/>
    <property type="evidence" value="ECO:0000314"/>
    <property type="project" value="UniProtKB"/>
</dbReference>
<dbReference type="GO" id="GO:0032695">
    <property type="term" value="P:negative regulation of interleukin-12 production"/>
    <property type="evidence" value="ECO:0000314"/>
    <property type="project" value="UniProtKB"/>
</dbReference>
<dbReference type="GO" id="GO:0010748">
    <property type="term" value="P:negative regulation of long-chain fatty acid import across plasma membrane"/>
    <property type="evidence" value="ECO:0000314"/>
    <property type="project" value="BHF-UCL"/>
</dbReference>
<dbReference type="GO" id="GO:0010751">
    <property type="term" value="P:negative regulation of nitric oxide mediated signal transduction"/>
    <property type="evidence" value="ECO:0000314"/>
    <property type="project" value="MGI"/>
</dbReference>
<dbReference type="GO" id="GO:0010757">
    <property type="term" value="P:negative regulation of plasminogen activation"/>
    <property type="evidence" value="ECO:0000314"/>
    <property type="project" value="BHF-UCL"/>
</dbReference>
<dbReference type="GO" id="GO:1903671">
    <property type="term" value="P:negative regulation of sprouting angiogenesis"/>
    <property type="evidence" value="ECO:0000316"/>
    <property type="project" value="BHF-UCL"/>
</dbReference>
<dbReference type="GO" id="GO:0032720">
    <property type="term" value="P:negative regulation of tumor necrosis factor production"/>
    <property type="evidence" value="ECO:0000314"/>
    <property type="project" value="UniProtKB"/>
</dbReference>
<dbReference type="GO" id="GO:0038060">
    <property type="term" value="P:nitric oxide-cGMP-mediated signaling"/>
    <property type="evidence" value="ECO:0000314"/>
    <property type="project" value="BHF-UCL"/>
</dbReference>
<dbReference type="GO" id="GO:0018149">
    <property type="term" value="P:peptide cross-linking"/>
    <property type="evidence" value="ECO:0000314"/>
    <property type="project" value="BHF-UCL"/>
</dbReference>
<dbReference type="GO" id="GO:0045766">
    <property type="term" value="P:positive regulation of angiogenesis"/>
    <property type="evidence" value="ECO:0000315"/>
    <property type="project" value="BHF-UCL"/>
</dbReference>
<dbReference type="GO" id="GO:0030194">
    <property type="term" value="P:positive regulation of blood coagulation"/>
    <property type="evidence" value="ECO:0000314"/>
    <property type="project" value="BHF-UCL"/>
</dbReference>
<dbReference type="GO" id="GO:0043536">
    <property type="term" value="P:positive regulation of blood vessel endothelial cell migration"/>
    <property type="evidence" value="ECO:0000314"/>
    <property type="project" value="BHF-UCL"/>
</dbReference>
<dbReference type="GO" id="GO:0030335">
    <property type="term" value="P:positive regulation of cell migration"/>
    <property type="evidence" value="ECO:0000314"/>
    <property type="project" value="BHF-UCL"/>
</dbReference>
<dbReference type="GO" id="GO:0008284">
    <property type="term" value="P:positive regulation of cell population proliferation"/>
    <property type="evidence" value="ECO:0000314"/>
    <property type="project" value="BHF-UCL"/>
</dbReference>
<dbReference type="GO" id="GO:0050921">
    <property type="term" value="P:positive regulation of chemotaxis"/>
    <property type="evidence" value="ECO:0000314"/>
    <property type="project" value="BHF-UCL"/>
</dbReference>
<dbReference type="GO" id="GO:2000353">
    <property type="term" value="P:positive regulation of endothelial cell apoptotic process"/>
    <property type="evidence" value="ECO:0000314"/>
    <property type="project" value="UniProtKB"/>
</dbReference>
<dbReference type="GO" id="GO:0010595">
    <property type="term" value="P:positive regulation of endothelial cell migration"/>
    <property type="evidence" value="ECO:0000314"/>
    <property type="project" value="BHF-UCL"/>
</dbReference>
<dbReference type="GO" id="GO:1902043">
    <property type="term" value="P:positive regulation of extrinsic apoptotic signaling pathway via death domain receptors"/>
    <property type="evidence" value="ECO:0000314"/>
    <property type="project" value="BHF-UCL"/>
</dbReference>
<dbReference type="GO" id="GO:0010763">
    <property type="term" value="P:positive regulation of fibroblast migration"/>
    <property type="evidence" value="ECO:0000314"/>
    <property type="project" value="BHF-UCL"/>
</dbReference>
<dbReference type="GO" id="GO:0043032">
    <property type="term" value="P:positive regulation of macrophage activation"/>
    <property type="evidence" value="ECO:0000314"/>
    <property type="project" value="BHF-UCL"/>
</dbReference>
<dbReference type="GO" id="GO:0010759">
    <property type="term" value="P:positive regulation of macrophage chemotaxis"/>
    <property type="evidence" value="ECO:0000250"/>
    <property type="project" value="BHF-UCL"/>
</dbReference>
<dbReference type="GO" id="GO:0043410">
    <property type="term" value="P:positive regulation of MAPK cascade"/>
    <property type="evidence" value="ECO:0000315"/>
    <property type="project" value="BHF-UCL"/>
</dbReference>
<dbReference type="GO" id="GO:0051897">
    <property type="term" value="P:positive regulation of phosphatidylinositol 3-kinase/protein kinase B signal transduction"/>
    <property type="evidence" value="ECO:0000314"/>
    <property type="project" value="UniProtKB"/>
</dbReference>
<dbReference type="GO" id="GO:0042327">
    <property type="term" value="P:positive regulation of phosphorylation"/>
    <property type="evidence" value="ECO:0000315"/>
    <property type="project" value="BHF-UCL"/>
</dbReference>
<dbReference type="GO" id="GO:2000379">
    <property type="term" value="P:positive regulation of reactive oxygen species metabolic process"/>
    <property type="evidence" value="ECO:0000314"/>
    <property type="project" value="UniProtKB"/>
</dbReference>
<dbReference type="GO" id="GO:0048661">
    <property type="term" value="P:positive regulation of smooth muscle cell proliferation"/>
    <property type="evidence" value="ECO:0000314"/>
    <property type="project" value="BHF-UCL"/>
</dbReference>
<dbReference type="GO" id="GO:0030511">
    <property type="term" value="P:positive regulation of transforming growth factor beta receptor signaling pathway"/>
    <property type="evidence" value="ECO:0000314"/>
    <property type="project" value="BHF-UCL"/>
</dbReference>
<dbReference type="GO" id="GO:0032914">
    <property type="term" value="P:positive regulation of transforming growth factor beta1 production"/>
    <property type="evidence" value="ECO:0000250"/>
    <property type="project" value="BHF-UCL"/>
</dbReference>
<dbReference type="GO" id="GO:0045727">
    <property type="term" value="P:positive regulation of translation"/>
    <property type="evidence" value="ECO:0000314"/>
    <property type="project" value="BHF-UCL"/>
</dbReference>
<dbReference type="GO" id="GO:0032760">
    <property type="term" value="P:positive regulation of tumor necrosis factor production"/>
    <property type="evidence" value="ECO:0000314"/>
    <property type="project" value="UniProtKB"/>
</dbReference>
<dbReference type="GO" id="GO:0051592">
    <property type="term" value="P:response to calcium ion"/>
    <property type="evidence" value="ECO:0000314"/>
    <property type="project" value="BHF-UCL"/>
</dbReference>
<dbReference type="GO" id="GO:0034976">
    <property type="term" value="P:response to endoplasmic reticulum stress"/>
    <property type="evidence" value="ECO:0000250"/>
    <property type="project" value="UniProtKB"/>
</dbReference>
<dbReference type="GO" id="GO:0009749">
    <property type="term" value="P:response to glucose"/>
    <property type="evidence" value="ECO:0000314"/>
    <property type="project" value="BHF-UCL"/>
</dbReference>
<dbReference type="GO" id="GO:0001666">
    <property type="term" value="P:response to hypoxia"/>
    <property type="evidence" value="ECO:0000303"/>
    <property type="project" value="BHF-UCL"/>
</dbReference>
<dbReference type="GO" id="GO:0032026">
    <property type="term" value="P:response to magnesium ion"/>
    <property type="evidence" value="ECO:0000314"/>
    <property type="project" value="BHF-UCL"/>
</dbReference>
<dbReference type="GO" id="GO:0009612">
    <property type="term" value="P:response to mechanical stimulus"/>
    <property type="evidence" value="ECO:0007669"/>
    <property type="project" value="Ensembl"/>
</dbReference>
<dbReference type="GO" id="GO:0032570">
    <property type="term" value="P:response to progesterone"/>
    <property type="evidence" value="ECO:0000304"/>
    <property type="project" value="BHF-UCL"/>
</dbReference>
<dbReference type="GO" id="GO:0033574">
    <property type="term" value="P:response to testosterone"/>
    <property type="evidence" value="ECO:0007669"/>
    <property type="project" value="Ensembl"/>
</dbReference>
<dbReference type="GO" id="GO:0006986">
    <property type="term" value="P:response to unfolded protein"/>
    <property type="evidence" value="ECO:0007669"/>
    <property type="project" value="UniProtKB-KW"/>
</dbReference>
<dbReference type="GO" id="GO:0009410">
    <property type="term" value="P:response to xenobiotic stimulus"/>
    <property type="evidence" value="ECO:0000270"/>
    <property type="project" value="UniProtKB"/>
</dbReference>
<dbReference type="GO" id="GO:0002040">
    <property type="term" value="P:sprouting angiogenesis"/>
    <property type="evidence" value="ECO:0000315"/>
    <property type="project" value="BHF-UCL"/>
</dbReference>
<dbReference type="CDD" id="cd00054">
    <property type="entry name" value="EGF_CA"/>
    <property type="match status" value="1"/>
</dbReference>
<dbReference type="FunFam" id="2.20.100.10:FF:000007">
    <property type="entry name" value="Thrombospondin 1"/>
    <property type="match status" value="2"/>
</dbReference>
<dbReference type="FunFam" id="2.60.120.200:FF:000009">
    <property type="entry name" value="Thrombospondin 1"/>
    <property type="match status" value="1"/>
</dbReference>
<dbReference type="FunFam" id="2.10.25.10:FF:000070">
    <property type="entry name" value="Thrombospondin 2"/>
    <property type="match status" value="1"/>
</dbReference>
<dbReference type="FunFam" id="4.10.1080.10:FF:000003">
    <property type="entry name" value="Thrombospondin 2"/>
    <property type="match status" value="1"/>
</dbReference>
<dbReference type="FunFam" id="2.10.25.10:FF:000025">
    <property type="entry name" value="Thrombospondin 3"/>
    <property type="match status" value="1"/>
</dbReference>
<dbReference type="FunFam" id="2.10.25.10:FF:000027">
    <property type="entry name" value="Thrombospondin 3"/>
    <property type="match status" value="1"/>
</dbReference>
<dbReference type="FunFam" id="4.10.1080.10:FF:000001">
    <property type="entry name" value="Thrombospondin 3"/>
    <property type="match status" value="1"/>
</dbReference>
<dbReference type="FunFam" id="2.20.100.10:FF:000115">
    <property type="entry name" value="Thrombospondin type-1 domain-containing protein 1"/>
    <property type="match status" value="1"/>
</dbReference>
<dbReference type="FunFam" id="2.60.120.200:FF:000041">
    <property type="entry name" value="thrombospondin-1"/>
    <property type="match status" value="1"/>
</dbReference>
<dbReference type="Gene3D" id="2.60.120.200">
    <property type="match status" value="2"/>
</dbReference>
<dbReference type="Gene3D" id="6.20.200.20">
    <property type="match status" value="1"/>
</dbReference>
<dbReference type="Gene3D" id="2.10.25.10">
    <property type="entry name" value="Laminin"/>
    <property type="match status" value="3"/>
</dbReference>
<dbReference type="Gene3D" id="2.20.100.10">
    <property type="entry name" value="Thrombospondin type-1 (TSP1) repeat"/>
    <property type="match status" value="3"/>
</dbReference>
<dbReference type="Gene3D" id="4.10.1080.10">
    <property type="entry name" value="TSP type-3 repeat"/>
    <property type="match status" value="2"/>
</dbReference>
<dbReference type="InterPro" id="IPR013320">
    <property type="entry name" value="ConA-like_dom_sf"/>
</dbReference>
<dbReference type="InterPro" id="IPR001881">
    <property type="entry name" value="EGF-like_Ca-bd_dom"/>
</dbReference>
<dbReference type="InterPro" id="IPR000742">
    <property type="entry name" value="EGF-like_dom"/>
</dbReference>
<dbReference type="InterPro" id="IPR003367">
    <property type="entry name" value="Thrombospondin_3-like_rpt"/>
</dbReference>
<dbReference type="InterPro" id="IPR017897">
    <property type="entry name" value="Thrombospondin_3_rpt"/>
</dbReference>
<dbReference type="InterPro" id="IPR008859">
    <property type="entry name" value="Thrombospondin_C"/>
</dbReference>
<dbReference type="InterPro" id="IPR000884">
    <property type="entry name" value="TSP1_rpt"/>
</dbReference>
<dbReference type="InterPro" id="IPR036383">
    <property type="entry name" value="TSP1_rpt_sf"/>
</dbReference>
<dbReference type="InterPro" id="IPR028974">
    <property type="entry name" value="TSP_type-3_rpt"/>
</dbReference>
<dbReference type="InterPro" id="IPR048287">
    <property type="entry name" value="TSPN-like_N"/>
</dbReference>
<dbReference type="InterPro" id="IPR001007">
    <property type="entry name" value="VWF_dom"/>
</dbReference>
<dbReference type="PANTHER" id="PTHR10199">
    <property type="entry name" value="THROMBOSPONDIN"/>
    <property type="match status" value="1"/>
</dbReference>
<dbReference type="PANTHER" id="PTHR10199:SF78">
    <property type="entry name" value="THROMBOSPONDIN-1"/>
    <property type="match status" value="1"/>
</dbReference>
<dbReference type="Pfam" id="PF00090">
    <property type="entry name" value="TSP_1"/>
    <property type="match status" value="3"/>
</dbReference>
<dbReference type="Pfam" id="PF02412">
    <property type="entry name" value="TSP_3"/>
    <property type="match status" value="7"/>
</dbReference>
<dbReference type="Pfam" id="PF05735">
    <property type="entry name" value="TSP_C"/>
    <property type="match status" value="1"/>
</dbReference>
<dbReference type="Pfam" id="PF00093">
    <property type="entry name" value="VWC"/>
    <property type="match status" value="1"/>
</dbReference>
<dbReference type="PRINTS" id="PR01705">
    <property type="entry name" value="TSP1REPEAT"/>
</dbReference>
<dbReference type="SMART" id="SM00181">
    <property type="entry name" value="EGF"/>
    <property type="match status" value="3"/>
</dbReference>
<dbReference type="SMART" id="SM00179">
    <property type="entry name" value="EGF_CA"/>
    <property type="match status" value="2"/>
</dbReference>
<dbReference type="SMART" id="SM00209">
    <property type="entry name" value="TSP1"/>
    <property type="match status" value="3"/>
</dbReference>
<dbReference type="SMART" id="SM00210">
    <property type="entry name" value="TSPN"/>
    <property type="match status" value="1"/>
</dbReference>
<dbReference type="SMART" id="SM00214">
    <property type="entry name" value="VWC"/>
    <property type="match status" value="1"/>
</dbReference>
<dbReference type="SUPFAM" id="SSF49899">
    <property type="entry name" value="Concanavalin A-like lectins/glucanases"/>
    <property type="match status" value="2"/>
</dbReference>
<dbReference type="SUPFAM" id="SSF57196">
    <property type="entry name" value="EGF/Laminin"/>
    <property type="match status" value="1"/>
</dbReference>
<dbReference type="SUPFAM" id="SSF57603">
    <property type="entry name" value="FnI-like domain"/>
    <property type="match status" value="1"/>
</dbReference>
<dbReference type="SUPFAM" id="SSF103647">
    <property type="entry name" value="TSP type-3 repeat"/>
    <property type="match status" value="3"/>
</dbReference>
<dbReference type="SUPFAM" id="SSF82895">
    <property type="entry name" value="TSP-1 type 1 repeat"/>
    <property type="match status" value="3"/>
</dbReference>
<dbReference type="PROSITE" id="PS01186">
    <property type="entry name" value="EGF_2"/>
    <property type="match status" value="1"/>
</dbReference>
<dbReference type="PROSITE" id="PS50026">
    <property type="entry name" value="EGF_3"/>
    <property type="match status" value="2"/>
</dbReference>
<dbReference type="PROSITE" id="PS50092">
    <property type="entry name" value="TSP1"/>
    <property type="match status" value="3"/>
</dbReference>
<dbReference type="PROSITE" id="PS51234">
    <property type="entry name" value="TSP3"/>
    <property type="match status" value="8"/>
</dbReference>
<dbReference type="PROSITE" id="PS51236">
    <property type="entry name" value="TSP_CTER"/>
    <property type="match status" value="1"/>
</dbReference>
<dbReference type="PROSITE" id="PS01208">
    <property type="entry name" value="VWFC_1"/>
    <property type="match status" value="1"/>
</dbReference>
<dbReference type="PROSITE" id="PS50184">
    <property type="entry name" value="VWFC_2"/>
    <property type="match status" value="1"/>
</dbReference>
<organism>
    <name type="scientific">Homo sapiens</name>
    <name type="common">Human</name>
    <dbReference type="NCBI Taxonomy" id="9606"/>
    <lineage>
        <taxon>Eukaryota</taxon>
        <taxon>Metazoa</taxon>
        <taxon>Chordata</taxon>
        <taxon>Craniata</taxon>
        <taxon>Vertebrata</taxon>
        <taxon>Euteleostomi</taxon>
        <taxon>Mammalia</taxon>
        <taxon>Eutheria</taxon>
        <taxon>Euarchontoglires</taxon>
        <taxon>Primates</taxon>
        <taxon>Haplorrhini</taxon>
        <taxon>Catarrhini</taxon>
        <taxon>Hominidae</taxon>
        <taxon>Homo</taxon>
    </lineage>
</organism>
<gene>
    <name evidence="46" type="primary">THBS1</name>
    <name type="synonym">TSP</name>
    <name type="synonym">TSP1</name>
</gene>
<accession>P07996</accession>
<accession>A8K6H4</accession>
<accession>B4E3J7</accession>
<accession>B9EGH6</accession>
<accession>Q15667</accession>
<accession>Q59E99</accession>
<comment type="function">
    <text evidence="2 10 12 14 15 17 23 24 26 27 30 32 35 38">Adhesive glycoprotein that mediates cell-to-cell and cell-to-matrix interactions (PubMed:15014436, PubMed:18285447, PubMed:2430973, PubMed:6489349). Multifunctional, involved in inflammation, angiogenesis, wound healing, reactive oxygen species (ROS) signaling, nitrous oxide (NO) signaling, apoptosis, senescence, aging, cellular self-renewal, stemness, and cardiovascular and metabolic homeostasis (PubMed:10613822, PubMed:11134179, PubMed:1371676, PubMed:14568985, PubMed:24511121, PubMed:29042481, PubMed:32679764). Negatively modulates dendritic cell activation and cytokine release, as part of an autocrine feedback loop, contributing to the resolution of inflammation and immune homeostasis (PubMed:14568985). Ligand for receptor CD47 (PubMed:19004835, PubMed:8550562). Modulates nitrous oxide (NO) signaling via CD47, hence playing a role as a pressor agent, supporting blood pressure (By similarity). Plays a role in endothelial cell senescence, acting via CD47, by increasing the abundance and activation of NADPH oxidase NOX1, and so generating excess ROS (PubMed:29042481). Inhibits stem cell self-renewal, acting via CD47 signaling, probably by regulation of the stem cell transcription factors POU5F1/OCT4, SOX2, MYC/c-Myc and KLF4 (By similarity). Negatively modulates wound healing, acting via CD47 (By similarity). Ligand for receptor CD36 (PubMed:10613822, PubMed:11134179, PubMed:1371676). Involved in inducing apoptosis in podocytes in response to elevated free fatty acids, acting via CD36 (By similarity). Plays a role in suppressing angiogenesis, acting, depending on context, via CD36 or CD47 (PubMed:10613822, PubMed:11134179, PubMed:1371676, PubMed:32679764). Promotes cellular senescence in a TP53-CDKN1A-RB1 signaling-dependent manner (PubMed:29042481). Ligand for immunoglobulin-like cell surface receptor SIRPA (PubMed:24511121). Involved in ROS signaling in non-phagocytic cells, stimulating NADPH oxidase-derived ROS production, acting via interaction with SIRPA (PubMed:24511121). Plays a role in metabolic dysfunction in diet-induced obesity, perhaps acting by exacerbating adipose inflammatory activity; its effects may be mediated, at least in part, through enhanced adipocyte proliferation (By similarity). Plays a role in ER stress response, via its interaction with the activating transcription factor 6 alpha (ATF6) which produces adaptive ER stress response factors (By similarity). May be involved in age-related conditions, including metabolic dysregulation, during normal aging (PubMed:29042481, PubMed:32679764).</text>
</comment>
<comment type="subunit">
    <text evidence="2 9 10 12 14 19 21 22 23 24 27 28 35 36 38">Homotrimer; disulfide-linked (PubMed:101549, PubMed:18285447). Can bind to fibrinogen, fibronectin, laminin, type V collagen and integrins alpha-V/beta-1, alpha-V/beta-3 and alpha-IIb/beta-3 (PubMed:2478219, PubMed:6489349, PubMed:6693501). Binds heparin (PubMed:101549, PubMed:16407063, PubMed:18065761). Interacts (via the C-terminal domain) with CD47 (PubMed:19004835, PubMed:8550562). Interacts (via the TSP type I repeats) with CD36; the interaction conveys an antiangiogenic effect (PubMed:10613822, PubMed:1371676). Interacts (via the TSP type I repeats) with HRG; the interaction blocks the antiangiogenic effect of THBS1 with CD36 (PubMed:11134179). Interacts with ATF6 (via lumenal domain) (By similarity). Interacts with FN1; this interaction is enhanced by TNFAIP6, which may act as a bridging molecule between FN1 and THBS1 (PubMed:18042364). Interacts with SIRPA; the interaction stimulates phosphorylation of SIRPA (PubMed:24511121).</text>
</comment>
<comment type="interaction">
    <interactant intactId="EBI-2530274">
        <id>P07996</id>
    </interactant>
    <interactant intactId="EBI-1220319">
        <id>P02751</id>
        <label>FN1</label>
    </interactant>
    <organismsDiffer>false</organismsDiffer>
    <experiments>2</experiments>
</comment>
<comment type="interaction">
    <interactant intactId="EBI-2530274">
        <id>P07996</id>
    </interactant>
    <interactant intactId="EBI-8869614">
        <id>Q15113</id>
        <label>PCOLCE</label>
    </interactant>
    <organismsDiffer>false</organismsDiffer>
    <experiments>3</experiments>
</comment>
<comment type="interaction">
    <interactant intactId="EBI-2530274">
        <id>P07996</id>
    </interactant>
    <interactant intactId="EBI-779636">
        <id>P01137</id>
        <label>TGFB1</label>
    </interactant>
    <organismsDiffer>false</organismsDiffer>
    <experiments>2</experiments>
</comment>
<comment type="interaction">
    <interactant intactId="EBI-13915509">
        <id>PRO_0000035842</id>
    </interactant>
    <interactant intactId="EBI-2808214">
        <id>P16671</id>
        <label>CD36</label>
    </interactant>
    <organismsDiffer>false</organismsDiffer>
    <experiments>2</experiments>
</comment>
<comment type="interaction">
    <interactant intactId="EBI-13915509">
        <id>PRO_0000035842</id>
    </interactant>
    <interactant intactId="EBI-352256">
        <id>Q92743</id>
        <label>HTRA1</label>
    </interactant>
    <organismsDiffer>false</organismsDiffer>
    <experiments>2</experiments>
</comment>
<comment type="subcellular location">
    <subcellularLocation>
        <location evidence="9 15 37">Secreted</location>
    </subcellularLocation>
    <subcellularLocation>
        <location evidence="37">Cell surface</location>
    </subcellularLocation>
    <subcellularLocation>
        <location evidence="23 34">Secreted</location>
        <location evidence="23 34">Extracellular space</location>
        <location evidence="23 34">Extracellular matrix</location>
    </subcellularLocation>
    <subcellularLocation>
        <location evidence="2">Endoplasmic reticulum</location>
    </subcellularLocation>
    <subcellularLocation>
        <location evidence="2">Sarcoplasmic reticulum</location>
    </subcellularLocation>
    <text evidence="2 34 37">Secreted by thrombin-activated platelets and binds to the cell surface in the presence of extracellular Ca(2+) (PubMed:101549, PubMed:6777381). Incorporated into the extracellular matrix (ECM) of fibroblasts (PubMed:6341993). The C-terminal region in trimeric form is required for retention in the ECM (PubMed:18285447). Also detected in the endoplasmic reticulum and sarcoplasmic reticulum where it plays a role in the ER stress response (By similarity).</text>
</comment>
<comment type="alternative products">
    <event type="alternative splicing"/>
    <isoform>
        <id>P07996-1</id>
        <name>1</name>
        <sequence type="displayed"/>
    </isoform>
    <isoform>
        <id>P07996-2</id>
        <name>2</name>
        <sequence type="described" ref="VSP_055757"/>
    </isoform>
</comment>
<comment type="tissue specificity">
    <text evidence="9 15">Expressed by platelets (at protein level) (PubMed:101549). Expressed by monocyte-derived immature and mature dendritic cells (at protein level) (PubMed:14568985).</text>
</comment>
<comment type="induction">
    <text evidence="15 29 30 32">Expression is induced by PGE2, S.aureus and lipopolysaccharide (PubMed:14568985). Induced in arteries and lung parenchyma following injury or stress (PubMed:27742621). Expression in vasculature, including arteries, increases in normal aging (PubMed:29042481, PubMed:32679764).</text>
</comment>
<comment type="similarity">
    <text evidence="42">Belongs to the thrombospondin family.</text>
</comment>
<comment type="sequence caution" evidence="42">
    <conflict type="erroneous initiation">
        <sequence resource="EMBL-CDS" id="BAD93149"/>
    </conflict>
    <text>Extended N-terminus.</text>
</comment>
<comment type="online information" name="Atlas of Genetics and Cytogenetics in Oncology and Haematology">
    <link uri="https://atlasgeneticsoncology.org/gene/42548/THBS1"/>
</comment>
<evidence type="ECO:0000250" key="1"/>
<evidence type="ECO:0000250" key="2">
    <source>
        <dbReference type="UniProtKB" id="P35441"/>
    </source>
</evidence>
<evidence type="ECO:0000255" key="3"/>
<evidence type="ECO:0000255" key="4">
    <source>
        <dbReference type="PROSITE-ProRule" id="PRU00076"/>
    </source>
</evidence>
<evidence type="ECO:0000255" key="5">
    <source>
        <dbReference type="PROSITE-ProRule" id="PRU00210"/>
    </source>
</evidence>
<evidence type="ECO:0000255" key="6">
    <source>
        <dbReference type="PROSITE-ProRule" id="PRU00220"/>
    </source>
</evidence>
<evidence type="ECO:0000255" key="7">
    <source>
        <dbReference type="PROSITE-ProRule" id="PRU00635"/>
    </source>
</evidence>
<evidence type="ECO:0000256" key="8">
    <source>
        <dbReference type="SAM" id="MobiDB-lite"/>
    </source>
</evidence>
<evidence type="ECO:0000269" key="9">
    <source>
    </source>
</evidence>
<evidence type="ECO:0000269" key="10">
    <source>
    </source>
</evidence>
<evidence type="ECO:0000269" key="11">
    <source>
    </source>
</evidence>
<evidence type="ECO:0000269" key="12">
    <source>
    </source>
</evidence>
<evidence type="ECO:0000269" key="13">
    <source>
    </source>
</evidence>
<evidence type="ECO:0000269" key="14">
    <source>
    </source>
</evidence>
<evidence type="ECO:0000269" key="15">
    <source>
    </source>
</evidence>
<evidence type="ECO:0000269" key="16">
    <source>
    </source>
</evidence>
<evidence type="ECO:0000269" key="17">
    <source>
    </source>
</evidence>
<evidence type="ECO:0000269" key="18">
    <source>
    </source>
</evidence>
<evidence type="ECO:0000269" key="19">
    <source>
    </source>
</evidence>
<evidence type="ECO:0000269" key="20">
    <source>
    </source>
</evidence>
<evidence type="ECO:0000269" key="21">
    <source>
    </source>
</evidence>
<evidence type="ECO:0000269" key="22">
    <source>
    </source>
</evidence>
<evidence type="ECO:0000269" key="23">
    <source>
    </source>
</evidence>
<evidence type="ECO:0000269" key="24">
    <source>
    </source>
</evidence>
<evidence type="ECO:0000269" key="25">
    <source>
    </source>
</evidence>
<evidence type="ECO:0000269" key="26">
    <source>
    </source>
</evidence>
<evidence type="ECO:0000269" key="27">
    <source>
    </source>
</evidence>
<evidence type="ECO:0000269" key="28">
    <source>
    </source>
</evidence>
<evidence type="ECO:0000269" key="29">
    <source>
    </source>
</evidence>
<evidence type="ECO:0000269" key="30">
    <source>
    </source>
</evidence>
<evidence type="ECO:0000269" key="31">
    <source>
    </source>
</evidence>
<evidence type="ECO:0000269" key="32">
    <source>
    </source>
</evidence>
<evidence type="ECO:0000269" key="33">
    <source>
    </source>
</evidence>
<evidence type="ECO:0000269" key="34">
    <source>
    </source>
</evidence>
<evidence type="ECO:0000269" key="35">
    <source>
    </source>
</evidence>
<evidence type="ECO:0000269" key="36">
    <source>
    </source>
</evidence>
<evidence type="ECO:0000269" key="37">
    <source>
    </source>
</evidence>
<evidence type="ECO:0000269" key="38">
    <source>
    </source>
</evidence>
<evidence type="ECO:0000269" key="39">
    <source ref="4"/>
</evidence>
<evidence type="ECO:0000303" key="40">
    <source>
    </source>
</evidence>
<evidence type="ECO:0000303" key="41">
    <source>
    </source>
</evidence>
<evidence type="ECO:0000305" key="42"/>
<evidence type="ECO:0000305" key="43">
    <source>
    </source>
</evidence>
<evidence type="ECO:0000305" key="44">
    <source>
    </source>
</evidence>
<evidence type="ECO:0000305" key="45">
    <source>
    </source>
</evidence>
<evidence type="ECO:0000312" key="46">
    <source>
        <dbReference type="HGNC" id="HGNC:11785"/>
    </source>
</evidence>
<evidence type="ECO:0007744" key="47">
    <source>
        <dbReference type="PDB" id="1LSL"/>
    </source>
</evidence>
<evidence type="ECO:0007744" key="48">
    <source>
        <dbReference type="PDB" id="1UX6"/>
    </source>
</evidence>
<evidence type="ECO:0007744" key="49">
    <source>
        <dbReference type="PDB" id="1Z78"/>
    </source>
</evidence>
<evidence type="ECO:0007744" key="50">
    <source>
        <dbReference type="PDB" id="2ERF"/>
    </source>
</evidence>
<evidence type="ECO:0007744" key="51">
    <source>
        <dbReference type="PDB" id="2ES3"/>
    </source>
</evidence>
<evidence type="ECO:0007744" key="52">
    <source>
        <dbReference type="PDB" id="2OUH"/>
    </source>
</evidence>
<evidence type="ECO:0007744" key="53">
    <source>
        <dbReference type="PDB" id="2OUJ"/>
    </source>
</evidence>
<evidence type="ECO:0007829" key="54">
    <source>
        <dbReference type="PDB" id="1LSL"/>
    </source>
</evidence>
<evidence type="ECO:0007829" key="55">
    <source>
        <dbReference type="PDB" id="1UX6"/>
    </source>
</evidence>
<evidence type="ECO:0007829" key="56">
    <source>
        <dbReference type="PDB" id="2ERF"/>
    </source>
</evidence>
<evidence type="ECO:0007829" key="57">
    <source>
        <dbReference type="PDB" id="2OUH"/>
    </source>
</evidence>
<evidence type="ECO:0007829" key="58">
    <source>
        <dbReference type="PDB" id="5FOE"/>
    </source>
</evidence>
<evidence type="ECO:0007829" key="59">
    <source>
        <dbReference type="PDB" id="7YYK"/>
    </source>
</evidence>
<sequence>MGLAWGLGVLFLMHVCGTNRIPESGGDNSVFDIFELTGAARKGSGRRLVKGPDPSSPAFRIEDANLIPPVPDDKFQDLVDAVRAEKGFLLLASLRQMKKTRGTLLALERKDHSGQVFSVVSNGKAGTLDLSLTVQGKQHVVSVEEALLATGQWKSITLFVQEDRAQLYIDCEKMENAELDVPIQSVFTRDLASIARLRIAKGGVNDNFQGVLQNVRFVFGTTPEDILRNKGCSSSTSVLLTLDNNVVNGSSPAIRTNYIGHKTKDLQAICGISCDELSSMVLELRGLRTIVTTLQDSIRKVTEENKELANELRRPPLCYHNGVQYRNNEEWTVDSCTECHCQNSVTICKKVSCPIMPCSNATVPDGECCPRCWPSDSADDGWSPWSEWTSCSTSCGNGIQQRGRSCDSLNNRCEGSSVQTRTCHIQECDKRFKQDGGWSHWSPWSSCSVTCGDGVITRIRLCNSPSPQMNGKPCEGEARETKACKKDACPINGGWGPWSPWDICSVTCGGGVQKRSRLCNNPTPQFGGKDCVGDVTENQICNKQDCPIDGCLSNPCFAGVKCTSYPDGSWKCGACPPGYSGNGIQCTDVDECKEVPDACFNHNGEHRCENTDPGYNCLPCPPRFTGSQPFGQGVEHATANKQVCKPRNPCTDGTHDCNKNAKCNYLGHYSDPMYRCECKPGYAGNGIICGEDTDLDGWPNENLVCVANATYHCKKDNCPNLPNSGQEDYDKDGIGDACDDDDDNDKIPDDRDNCPFHYNPAQYDYDRDDVGDRCDNCPYNHNPDQADTDNNGEGDACAADIDGDGILNERDNCQYVYNVDQRDTDMDGVGDQCDNCPLEHNPDQLDSDSDRIGDTCDNNQDIDEDGHQNNLDNCPYVPNANQADHDKDGKGDACDHDDDNDGIPDDKDNCRLVPNPDQKDSDGDGRGDACKDDFDHDSVPDIDDICPENVDISETDFRRFQMIPLDPKGTSQNDPNWVVRHQGKELVQTVNCDPGLAVGYDEFNAVDFSGTFFINTERDDDYAGFVFGYQSSSRFYVVMWKQVTQSYWDTNPTRAQGYSGLSVKVVNSTTGPGEHLRNALWHTGNTPGQVRTLWHDPRHIGWKDFTAYRWRLSHRPKTGFIRVVMYEGKKIMADSGPIYDKTYAGGRLGLFVFSQEMVFFSDLKYECRDP</sequence>